<evidence type="ECO:0000250" key="1">
    <source>
        <dbReference type="UniProtKB" id="Q9JI91"/>
    </source>
</evidence>
<evidence type="ECO:0000255" key="2">
    <source>
        <dbReference type="PROSITE-ProRule" id="PRU00044"/>
    </source>
</evidence>
<evidence type="ECO:0000255" key="3">
    <source>
        <dbReference type="PROSITE-ProRule" id="PRU00448"/>
    </source>
</evidence>
<evidence type="ECO:0000269" key="4">
    <source>
    </source>
</evidence>
<evidence type="ECO:0000269" key="5">
    <source>
    </source>
</evidence>
<evidence type="ECO:0000269" key="6">
    <source>
    </source>
</evidence>
<evidence type="ECO:0000269" key="7">
    <source>
    </source>
</evidence>
<evidence type="ECO:0000269" key="8">
    <source>
    </source>
</evidence>
<evidence type="ECO:0000269" key="9">
    <source>
    </source>
</evidence>
<evidence type="ECO:0000269" key="10">
    <source>
    </source>
</evidence>
<evidence type="ECO:0000269" key="11">
    <source>
    </source>
</evidence>
<evidence type="ECO:0000269" key="12">
    <source>
    </source>
</evidence>
<evidence type="ECO:0000269" key="13">
    <source>
    </source>
</evidence>
<evidence type="ECO:0000269" key="14">
    <source>
    </source>
</evidence>
<evidence type="ECO:0000269" key="15">
    <source>
    </source>
</evidence>
<evidence type="ECO:0000269" key="16">
    <source>
    </source>
</evidence>
<evidence type="ECO:0000269" key="17">
    <source>
    </source>
</evidence>
<evidence type="ECO:0000269" key="18">
    <source>
    </source>
</evidence>
<evidence type="ECO:0000269" key="19">
    <source>
    </source>
</evidence>
<evidence type="ECO:0000303" key="20">
    <source>
    </source>
</evidence>
<evidence type="ECO:0000305" key="21"/>
<evidence type="ECO:0007829" key="22">
    <source>
        <dbReference type="PDB" id="1HCI"/>
    </source>
</evidence>
<evidence type="ECO:0007829" key="23">
    <source>
        <dbReference type="PDB" id="1QUU"/>
    </source>
</evidence>
<evidence type="ECO:0007829" key="24">
    <source>
        <dbReference type="PDB" id="4D1E"/>
    </source>
</evidence>
<evidence type="ECO:0007829" key="25">
    <source>
        <dbReference type="PDB" id="5A36"/>
    </source>
</evidence>
<evidence type="ECO:0007829" key="26">
    <source>
        <dbReference type="PDB" id="6SWT"/>
    </source>
</evidence>
<evidence type="ECO:0007829" key="27">
    <source>
        <dbReference type="PDB" id="6TS3"/>
    </source>
</evidence>
<evidence type="ECO:0007829" key="28">
    <source>
        <dbReference type="PDB" id="7A8T"/>
    </source>
</evidence>
<name>ACTN2_HUMAN</name>
<organism>
    <name type="scientific">Homo sapiens</name>
    <name type="common">Human</name>
    <dbReference type="NCBI Taxonomy" id="9606"/>
    <lineage>
        <taxon>Eukaryota</taxon>
        <taxon>Metazoa</taxon>
        <taxon>Chordata</taxon>
        <taxon>Craniata</taxon>
        <taxon>Vertebrata</taxon>
        <taxon>Euteleostomi</taxon>
        <taxon>Mammalia</taxon>
        <taxon>Eutheria</taxon>
        <taxon>Euarchontoglires</taxon>
        <taxon>Primates</taxon>
        <taxon>Haplorrhini</taxon>
        <taxon>Catarrhini</taxon>
        <taxon>Hominidae</taxon>
        <taxon>Homo</taxon>
    </lineage>
</organism>
<sequence>MNQIEPGVQYNYVYDEDEYMIQEEEWDRDLLLDPAWEKQQRKTFTAWCNSHLRKAGTQIENIEEDFRNGLKLMLLLEVISGERLPKPDRGKMRFHKIANVNKALDYIASKGVKLVSIGAEEIVDGNVKMTLGMIWTIILRFAIQDISVEETSAKEGLLLWCQRKTAPYRNVNIQNFHTSWKDGLGLCALIHRHRPDLIDYSKLNKDDPIGNINLAMEIAEKHLDIPKMLDAEDIVNTPKPDERAIMTYVSCFYHAFAGAEQAETAANRICKVLAVNQENERLMEEYERLASELLEWIRRTIPWLENRTPEKTMQAMQKKLEDFRDYRRKHKPPKVQEKCQLEINFNTLQTKLRISNRPAFMPSEGKMVSDIAGAWQRLEQAEKGYEEWLLNEIRRLERLEHLAEKFRQKASTHETWAYGKEQILLQKDYESASLTEVRALLRKHEAFESDLAAHQDRVEQIAAIAQELNELDYHDAVNVNDRCQKICDQWDRLGTLTQKRREALERMEKLLETIDQLHLEFAKRAAPFNNWMEGAMEDLQDMFIVHSIEEIQSLITAHEQFKATLPEADGERQSIMAIQNEVEKVIQSYNIRISSSNPYSTVTMDELRTKWDKVKQLVPIRDQSLQEELARQHANERLRRQFAAQANAIGPWIQNKMEEIARSSIQITGALEDQMNQLKQYEHNIINYKNNIDKLEGDHQLIQEALVFDNKHTNYTMEHIRVGWELLLTTIARTINEVETQILTRDAKGITQEQMNEFRASFNHFDRRKNGLMDHEDFRACLISMGYDLGEAEFARIMTLVDPNGQGTVTFQSFIDFMTRETADTDTAEQVIASFRILASDKPYILAEELRRELPPDQAQYCIKRMPAYSGPGSVPGALDYAAFSSALYGESDL</sequence>
<gene>
    <name type="primary">ACTN2</name>
</gene>
<keyword id="KW-0002">3D-structure</keyword>
<keyword id="KW-0009">Actin-binding</keyword>
<keyword id="KW-0025">Alternative splicing</keyword>
<keyword id="KW-0106">Calcium</keyword>
<keyword id="KW-0122">Cardiomyopathy</keyword>
<keyword id="KW-0963">Cytoplasm</keyword>
<keyword id="KW-0225">Disease variant</keyword>
<keyword id="KW-0479">Metal-binding</keyword>
<keyword id="KW-0597">Phosphoprotein</keyword>
<keyword id="KW-1267">Proteomics identification</keyword>
<keyword id="KW-1185">Reference proteome</keyword>
<keyword id="KW-0677">Repeat</keyword>
<keyword id="KW-0832">Ubl conjugation</keyword>
<accession>P35609</accession>
<accession>B1ANE4</accession>
<accession>B2RCS5</accession>
<accession>Q86TF4</accession>
<accession>Q86TI8</accession>
<protein>
    <recommendedName>
        <fullName>Alpha-actinin-2</fullName>
    </recommendedName>
    <alternativeName>
        <fullName>Alpha-actinin skeletal muscle isoform 2</fullName>
    </alternativeName>
    <alternativeName>
        <fullName>F-actin cross-linking protein</fullName>
    </alternativeName>
</protein>
<dbReference type="EMBL" id="M86406">
    <property type="protein sequence ID" value="AAA51583.1"/>
    <property type="molecule type" value="mRNA"/>
</dbReference>
<dbReference type="EMBL" id="M86804">
    <property type="protein sequence ID" value="AAA51584.1"/>
    <property type="molecule type" value="Genomic_DNA"/>
</dbReference>
<dbReference type="EMBL" id="AJ249756">
    <property type="protein sequence ID" value="CAB61269.1"/>
    <property type="molecule type" value="Genomic_DNA"/>
</dbReference>
<dbReference type="EMBL" id="AJ249757">
    <property type="protein sequence ID" value="CAB61269.1"/>
    <property type="status" value="JOINED"/>
    <property type="molecule type" value="Genomic_DNA"/>
</dbReference>
<dbReference type="EMBL" id="AJ249758">
    <property type="protein sequence ID" value="CAB61269.1"/>
    <property type="status" value="JOINED"/>
    <property type="molecule type" value="Genomic_DNA"/>
</dbReference>
<dbReference type="EMBL" id="AJ249759">
    <property type="protein sequence ID" value="CAB61269.1"/>
    <property type="status" value="JOINED"/>
    <property type="molecule type" value="Genomic_DNA"/>
</dbReference>
<dbReference type="EMBL" id="AJ249760">
    <property type="protein sequence ID" value="CAB61269.1"/>
    <property type="status" value="JOINED"/>
    <property type="molecule type" value="Genomic_DNA"/>
</dbReference>
<dbReference type="EMBL" id="AJ249761">
    <property type="protein sequence ID" value="CAB61269.1"/>
    <property type="status" value="JOINED"/>
    <property type="molecule type" value="Genomic_DNA"/>
</dbReference>
<dbReference type="EMBL" id="AJ249762">
    <property type="protein sequence ID" value="CAB61269.1"/>
    <property type="status" value="JOINED"/>
    <property type="molecule type" value="Genomic_DNA"/>
</dbReference>
<dbReference type="EMBL" id="AJ249763">
    <property type="protein sequence ID" value="CAB61269.1"/>
    <property type="status" value="JOINED"/>
    <property type="molecule type" value="Genomic_DNA"/>
</dbReference>
<dbReference type="EMBL" id="AJ249764">
    <property type="protein sequence ID" value="CAB61269.1"/>
    <property type="status" value="JOINED"/>
    <property type="molecule type" value="Genomic_DNA"/>
</dbReference>
<dbReference type="EMBL" id="AJ249765">
    <property type="protein sequence ID" value="CAB61269.1"/>
    <property type="status" value="JOINED"/>
    <property type="molecule type" value="Genomic_DNA"/>
</dbReference>
<dbReference type="EMBL" id="AJ249766">
    <property type="protein sequence ID" value="CAB61269.1"/>
    <property type="status" value="JOINED"/>
    <property type="molecule type" value="Genomic_DNA"/>
</dbReference>
<dbReference type="EMBL" id="AJ249767">
    <property type="protein sequence ID" value="CAB61269.1"/>
    <property type="status" value="JOINED"/>
    <property type="molecule type" value="Genomic_DNA"/>
</dbReference>
<dbReference type="EMBL" id="AJ249768">
    <property type="protein sequence ID" value="CAB61269.1"/>
    <property type="status" value="JOINED"/>
    <property type="molecule type" value="Genomic_DNA"/>
</dbReference>
<dbReference type="EMBL" id="AJ249769">
    <property type="protein sequence ID" value="CAB61269.1"/>
    <property type="status" value="JOINED"/>
    <property type="molecule type" value="Genomic_DNA"/>
</dbReference>
<dbReference type="EMBL" id="AJ249770">
    <property type="protein sequence ID" value="CAB61269.1"/>
    <property type="status" value="JOINED"/>
    <property type="molecule type" value="Genomic_DNA"/>
</dbReference>
<dbReference type="EMBL" id="AJ249771">
    <property type="protein sequence ID" value="CAB61269.1"/>
    <property type="status" value="JOINED"/>
    <property type="molecule type" value="Genomic_DNA"/>
</dbReference>
<dbReference type="EMBL" id="AJ249772">
    <property type="protein sequence ID" value="CAB61269.1"/>
    <property type="status" value="JOINED"/>
    <property type="molecule type" value="Genomic_DNA"/>
</dbReference>
<dbReference type="EMBL" id="AJ249773">
    <property type="protein sequence ID" value="CAB61269.1"/>
    <property type="status" value="JOINED"/>
    <property type="molecule type" value="Genomic_DNA"/>
</dbReference>
<dbReference type="EMBL" id="AJ249774">
    <property type="protein sequence ID" value="CAB61269.1"/>
    <property type="status" value="JOINED"/>
    <property type="molecule type" value="Genomic_DNA"/>
</dbReference>
<dbReference type="EMBL" id="AJ249775">
    <property type="protein sequence ID" value="CAB61269.1"/>
    <property type="status" value="JOINED"/>
    <property type="molecule type" value="Genomic_DNA"/>
</dbReference>
<dbReference type="EMBL" id="AJ249776">
    <property type="protein sequence ID" value="CAB61269.1"/>
    <property type="status" value="JOINED"/>
    <property type="molecule type" value="Genomic_DNA"/>
</dbReference>
<dbReference type="EMBL" id="AK315250">
    <property type="protein sequence ID" value="BAG37672.1"/>
    <property type="molecule type" value="mRNA"/>
</dbReference>
<dbReference type="EMBL" id="AL359185">
    <property type="status" value="NOT_ANNOTATED_CDS"/>
    <property type="molecule type" value="Genomic_DNA"/>
</dbReference>
<dbReference type="EMBL" id="AL359921">
    <property type="status" value="NOT_ANNOTATED_CDS"/>
    <property type="molecule type" value="Genomic_DNA"/>
</dbReference>
<dbReference type="EMBL" id="CH471098">
    <property type="protein sequence ID" value="EAW70064.1"/>
    <property type="molecule type" value="Genomic_DNA"/>
</dbReference>
<dbReference type="EMBL" id="CH471098">
    <property type="protein sequence ID" value="EAW70065.1"/>
    <property type="molecule type" value="Genomic_DNA"/>
</dbReference>
<dbReference type="EMBL" id="BC047901">
    <property type="protein sequence ID" value="AAH47901.2"/>
    <property type="molecule type" value="mRNA"/>
</dbReference>
<dbReference type="EMBL" id="BC051770">
    <property type="protein sequence ID" value="AAH51770.2"/>
    <property type="molecule type" value="mRNA"/>
</dbReference>
<dbReference type="CCDS" id="CCDS1613.1">
    <molecule id="P35609-1"/>
</dbReference>
<dbReference type="CCDS" id="CCDS60455.1">
    <molecule id="P35609-2"/>
</dbReference>
<dbReference type="PIR" id="A40199">
    <property type="entry name" value="FAHUA2"/>
</dbReference>
<dbReference type="RefSeq" id="NP_001094.1">
    <molecule id="P35609-1"/>
    <property type="nucleotide sequence ID" value="NM_001103.4"/>
</dbReference>
<dbReference type="RefSeq" id="NP_001265272.1">
    <molecule id="P35609-2"/>
    <property type="nucleotide sequence ID" value="NM_001278343.2"/>
</dbReference>
<dbReference type="RefSeq" id="NP_001265273.1">
    <property type="nucleotide sequence ID" value="NM_001278344.1"/>
</dbReference>
<dbReference type="PDB" id="1H8B">
    <property type="method" value="NMR"/>
    <property type="chains" value="A=822-894"/>
</dbReference>
<dbReference type="PDB" id="1HCI">
    <property type="method" value="X-ray"/>
    <property type="resolution" value="2.80 A"/>
    <property type="chains" value="A/B=274-746"/>
</dbReference>
<dbReference type="PDB" id="1QUU">
    <property type="method" value="X-ray"/>
    <property type="resolution" value="2.50 A"/>
    <property type="chains" value="A=391-637"/>
</dbReference>
<dbReference type="PDB" id="4D1E">
    <property type="method" value="X-ray"/>
    <property type="resolution" value="3.50 A"/>
    <property type="chains" value="A=19-894"/>
</dbReference>
<dbReference type="PDB" id="5A36">
    <property type="method" value="X-ray"/>
    <property type="resolution" value="2.00 A"/>
    <property type="chains" value="A/B=19-266"/>
</dbReference>
<dbReference type="PDB" id="5A37">
    <property type="method" value="X-ray"/>
    <property type="resolution" value="1.88 A"/>
    <property type="chains" value="A/B=19-266"/>
</dbReference>
<dbReference type="PDB" id="5A38">
    <property type="method" value="X-ray"/>
    <property type="resolution" value="1.90 A"/>
    <property type="chains" value="A/B=19-266"/>
</dbReference>
<dbReference type="PDB" id="5A4B">
    <property type="method" value="X-ray"/>
    <property type="resolution" value="2.01 A"/>
    <property type="chains" value="A/B=19-266"/>
</dbReference>
<dbReference type="PDB" id="6SWT">
    <property type="method" value="X-ray"/>
    <property type="resolution" value="1.20 A"/>
    <property type="chains" value="A=19-270"/>
</dbReference>
<dbReference type="PDB" id="6TS3">
    <property type="method" value="X-ray"/>
    <property type="resolution" value="1.28 A"/>
    <property type="chains" value="A/B=825-894"/>
</dbReference>
<dbReference type="PDB" id="7A8T">
    <property type="method" value="X-ray"/>
    <property type="resolution" value="2.69 A"/>
    <property type="chains" value="A=274-746"/>
</dbReference>
<dbReference type="PDB" id="7A8U">
    <property type="method" value="X-ray"/>
    <property type="resolution" value="3.80 A"/>
    <property type="chains" value="A=274-746"/>
</dbReference>
<dbReference type="PDB" id="7B55">
    <property type="method" value="X-ray"/>
    <property type="resolution" value="1.60 A"/>
    <property type="chains" value="A=825-894"/>
</dbReference>
<dbReference type="PDB" id="7B56">
    <property type="method" value="X-ray"/>
    <property type="resolution" value="1.45 A"/>
    <property type="chains" value="A=825-894"/>
</dbReference>
<dbReference type="PDB" id="7B57">
    <property type="method" value="X-ray"/>
    <property type="resolution" value="1.95 A"/>
    <property type="chains" value="A=825-894"/>
</dbReference>
<dbReference type="PDBsum" id="1H8B"/>
<dbReference type="PDBsum" id="1HCI"/>
<dbReference type="PDBsum" id="1QUU"/>
<dbReference type="PDBsum" id="4D1E"/>
<dbReference type="PDBsum" id="5A36"/>
<dbReference type="PDBsum" id="5A37"/>
<dbReference type="PDBsum" id="5A38"/>
<dbReference type="PDBsum" id="5A4B"/>
<dbReference type="PDBsum" id="6SWT"/>
<dbReference type="PDBsum" id="6TS3"/>
<dbReference type="PDBsum" id="7A8T"/>
<dbReference type="PDBsum" id="7A8U"/>
<dbReference type="PDBsum" id="7B55"/>
<dbReference type="PDBsum" id="7B56"/>
<dbReference type="PDBsum" id="7B57"/>
<dbReference type="BMRB" id="P35609"/>
<dbReference type="SASBDB" id="P35609"/>
<dbReference type="SMR" id="P35609"/>
<dbReference type="BioGRID" id="106603">
    <property type="interactions" value="148"/>
</dbReference>
<dbReference type="CORUM" id="P35609"/>
<dbReference type="DIP" id="DIP-383N"/>
<dbReference type="FunCoup" id="P35609">
    <property type="interactions" value="406"/>
</dbReference>
<dbReference type="IntAct" id="P35609">
    <property type="interactions" value="105"/>
</dbReference>
<dbReference type="MINT" id="P35609"/>
<dbReference type="STRING" id="9606.ENSP00000355537"/>
<dbReference type="TCDB" id="8.A.66.1.3">
    <property type="family name" value="the dystrophin (dystrophin) family"/>
</dbReference>
<dbReference type="GlyCosmos" id="P35609">
    <property type="glycosylation" value="2 sites, 1 glycan"/>
</dbReference>
<dbReference type="GlyGen" id="P35609">
    <property type="glycosylation" value="2 sites, 1 O-linked glycan (2 sites)"/>
</dbReference>
<dbReference type="iPTMnet" id="P35609"/>
<dbReference type="MetOSite" id="P35609"/>
<dbReference type="PhosphoSitePlus" id="P35609"/>
<dbReference type="SwissPalm" id="P35609"/>
<dbReference type="BioMuta" id="ACTN2"/>
<dbReference type="DMDM" id="543742"/>
<dbReference type="jPOST" id="P35609"/>
<dbReference type="MassIVE" id="P35609"/>
<dbReference type="PaxDb" id="9606-ENSP00000443495"/>
<dbReference type="PeptideAtlas" id="P35609"/>
<dbReference type="PRIDE" id="P35609"/>
<dbReference type="ProteomicsDB" id="3424"/>
<dbReference type="ProteomicsDB" id="55100">
    <molecule id="P35609-1"/>
</dbReference>
<dbReference type="Pumba" id="P35609"/>
<dbReference type="Antibodypedia" id="1323">
    <property type="antibodies" value="447 antibodies from 39 providers"/>
</dbReference>
<dbReference type="DNASU" id="88"/>
<dbReference type="Ensembl" id="ENST00000366578.6">
    <molecule id="P35609-1"/>
    <property type="protein sequence ID" value="ENSP00000355537.4"/>
    <property type="gene ID" value="ENSG00000077522.15"/>
</dbReference>
<dbReference type="Ensembl" id="ENST00000542672.7">
    <molecule id="P35609-2"/>
    <property type="protein sequence ID" value="ENSP00000443495.1"/>
    <property type="gene ID" value="ENSG00000077522.15"/>
</dbReference>
<dbReference type="GeneID" id="88"/>
<dbReference type="KEGG" id="hsa:88"/>
<dbReference type="MANE-Select" id="ENST00000366578.6">
    <property type="protein sequence ID" value="ENSP00000355537.4"/>
    <property type="RefSeq nucleotide sequence ID" value="NM_001103.4"/>
    <property type="RefSeq protein sequence ID" value="NP_001094.1"/>
</dbReference>
<dbReference type="UCSC" id="uc001hyf.4">
    <molecule id="P35609-1"/>
    <property type="organism name" value="human"/>
</dbReference>
<dbReference type="AGR" id="HGNC:164"/>
<dbReference type="CTD" id="88"/>
<dbReference type="DisGeNET" id="88"/>
<dbReference type="GeneCards" id="ACTN2"/>
<dbReference type="GeneReviews" id="ACTN2"/>
<dbReference type="HGNC" id="HGNC:164">
    <property type="gene designation" value="ACTN2"/>
</dbReference>
<dbReference type="HPA" id="ENSG00000077522">
    <property type="expression patterns" value="Group enriched (heart muscle, skeletal muscle, tongue)"/>
</dbReference>
<dbReference type="MalaCards" id="ACTN2"/>
<dbReference type="MIM" id="102573">
    <property type="type" value="gene"/>
</dbReference>
<dbReference type="MIM" id="612158">
    <property type="type" value="phenotype"/>
</dbReference>
<dbReference type="MIM" id="618654">
    <property type="type" value="phenotype"/>
</dbReference>
<dbReference type="MIM" id="618655">
    <property type="type" value="phenotype"/>
</dbReference>
<dbReference type="neXtProt" id="NX_P35609"/>
<dbReference type="OpenTargets" id="ENSG00000077522"/>
<dbReference type="Orphanet" id="154">
    <property type="disease" value="Familial isolated dilated cardiomyopathy"/>
</dbReference>
<dbReference type="PharmGKB" id="PA25"/>
<dbReference type="VEuPathDB" id="HostDB:ENSG00000077522"/>
<dbReference type="eggNOG" id="KOG0035">
    <property type="taxonomic scope" value="Eukaryota"/>
</dbReference>
<dbReference type="GeneTree" id="ENSGT00940000153968"/>
<dbReference type="HOGENOM" id="CLU_005217_1_1_1"/>
<dbReference type="InParanoid" id="P35609"/>
<dbReference type="OMA" id="IMILVDP"/>
<dbReference type="OrthoDB" id="10017054at2759"/>
<dbReference type="PAN-GO" id="P35609">
    <property type="GO annotations" value="7 GO annotations based on evolutionary models"/>
</dbReference>
<dbReference type="PhylomeDB" id="P35609"/>
<dbReference type="TreeFam" id="TF352676"/>
<dbReference type="PathwayCommons" id="P35609"/>
<dbReference type="Reactome" id="R-HSA-114608">
    <property type="pathway name" value="Platelet degranulation"/>
</dbReference>
<dbReference type="Reactome" id="R-HSA-373753">
    <property type="pathway name" value="Nephrin family interactions"/>
</dbReference>
<dbReference type="Reactome" id="R-HSA-390522">
    <property type="pathway name" value="Striated Muscle Contraction"/>
</dbReference>
<dbReference type="Reactome" id="R-HSA-438066">
    <property type="pathway name" value="Unblocking of NMDA receptors, glutamate binding and activation"/>
</dbReference>
<dbReference type="Reactome" id="R-HSA-442982">
    <property type="pathway name" value="Ras activation upon Ca2+ influx through NMDA receptor"/>
</dbReference>
<dbReference type="Reactome" id="R-HSA-5673001">
    <property type="pathway name" value="RAF/MAP kinase cascade"/>
</dbReference>
<dbReference type="Reactome" id="R-HSA-9609736">
    <property type="pathway name" value="Assembly and cell surface presentation of NMDA receptors"/>
</dbReference>
<dbReference type="Reactome" id="R-HSA-9617324">
    <property type="pathway name" value="Negative regulation of NMDA receptor-mediated neuronal transmission"/>
</dbReference>
<dbReference type="Reactome" id="R-HSA-9620244">
    <property type="pathway name" value="Long-term potentiation"/>
</dbReference>
<dbReference type="SignaLink" id="P35609"/>
<dbReference type="BioGRID-ORCS" id="88">
    <property type="hits" value="17 hits in 1146 CRISPR screens"/>
</dbReference>
<dbReference type="CD-CODE" id="FB4E32DD">
    <property type="entry name" value="Presynaptic clusters and postsynaptic densities"/>
</dbReference>
<dbReference type="ChiTaRS" id="ACTN2">
    <property type="organism name" value="human"/>
</dbReference>
<dbReference type="EvolutionaryTrace" id="P35609"/>
<dbReference type="GeneWiki" id="Actinin,_alpha_2"/>
<dbReference type="GenomeRNAi" id="88"/>
<dbReference type="Pharos" id="P35609">
    <property type="development level" value="Tbio"/>
</dbReference>
<dbReference type="PRO" id="PR:P35609"/>
<dbReference type="Proteomes" id="UP000005640">
    <property type="component" value="Chromosome 1"/>
</dbReference>
<dbReference type="RNAct" id="P35609">
    <property type="molecule type" value="protein"/>
</dbReference>
<dbReference type="Bgee" id="ENSG00000077522">
    <property type="expression patterns" value="Expressed in skeletal muscle tissue of rectus abdominis and 156 other cell types or tissues"/>
</dbReference>
<dbReference type="ExpressionAtlas" id="P35609">
    <property type="expression patterns" value="baseline and differential"/>
</dbReference>
<dbReference type="GO" id="GO:0005884">
    <property type="term" value="C:actin filament"/>
    <property type="evidence" value="ECO:0000304"/>
    <property type="project" value="ProtInc"/>
</dbReference>
<dbReference type="GO" id="GO:0030054">
    <property type="term" value="C:cell junction"/>
    <property type="evidence" value="ECO:0000318"/>
    <property type="project" value="GO_Central"/>
</dbReference>
<dbReference type="GO" id="GO:0042995">
    <property type="term" value="C:cell projection"/>
    <property type="evidence" value="ECO:0000318"/>
    <property type="project" value="GO_Central"/>
</dbReference>
<dbReference type="GO" id="GO:0030864">
    <property type="term" value="C:cortical actin cytoskeleton"/>
    <property type="evidence" value="ECO:0000318"/>
    <property type="project" value="GO_Central"/>
</dbReference>
<dbReference type="GO" id="GO:0005856">
    <property type="term" value="C:cytoskeleton"/>
    <property type="evidence" value="ECO:0000303"/>
    <property type="project" value="UniProtKB"/>
</dbReference>
<dbReference type="GO" id="GO:0005829">
    <property type="term" value="C:cytosol"/>
    <property type="evidence" value="ECO:0000304"/>
    <property type="project" value="Reactome"/>
</dbReference>
<dbReference type="GO" id="GO:0043197">
    <property type="term" value="C:dendritic spine"/>
    <property type="evidence" value="ECO:0000304"/>
    <property type="project" value="UniProtKB"/>
</dbReference>
<dbReference type="GO" id="GO:0070062">
    <property type="term" value="C:extracellular exosome"/>
    <property type="evidence" value="ECO:0007005"/>
    <property type="project" value="UniProtKB"/>
</dbReference>
<dbReference type="GO" id="GO:0005576">
    <property type="term" value="C:extracellular region"/>
    <property type="evidence" value="ECO:0000304"/>
    <property type="project" value="Reactome"/>
</dbReference>
<dbReference type="GO" id="GO:0030175">
    <property type="term" value="C:filopodium"/>
    <property type="evidence" value="ECO:0000314"/>
    <property type="project" value="UniProtKB"/>
</dbReference>
<dbReference type="GO" id="GO:0005925">
    <property type="term" value="C:focal adhesion"/>
    <property type="evidence" value="ECO:0000315"/>
    <property type="project" value="UniProtKB"/>
</dbReference>
<dbReference type="GO" id="GO:0098978">
    <property type="term" value="C:glutamatergic synapse"/>
    <property type="evidence" value="ECO:0007669"/>
    <property type="project" value="Ensembl"/>
</dbReference>
<dbReference type="GO" id="GO:0031093">
    <property type="term" value="C:platelet alpha granule lumen"/>
    <property type="evidence" value="ECO:0000304"/>
    <property type="project" value="Reactome"/>
</dbReference>
<dbReference type="GO" id="GO:0098871">
    <property type="term" value="C:postsynaptic actin cytoskeleton"/>
    <property type="evidence" value="ECO:0007669"/>
    <property type="project" value="Ensembl"/>
</dbReference>
<dbReference type="GO" id="GO:0098839">
    <property type="term" value="C:postsynaptic density membrane"/>
    <property type="evidence" value="ECO:0007669"/>
    <property type="project" value="Ensembl"/>
</dbReference>
<dbReference type="GO" id="GO:0099092">
    <property type="term" value="C:postsynaptic density, intracellular component"/>
    <property type="evidence" value="ECO:0007669"/>
    <property type="project" value="Ensembl"/>
</dbReference>
<dbReference type="GO" id="GO:0031143">
    <property type="term" value="C:pseudopodium"/>
    <property type="evidence" value="ECO:0000304"/>
    <property type="project" value="UniProtKB"/>
</dbReference>
<dbReference type="GO" id="GO:0030018">
    <property type="term" value="C:Z disc"/>
    <property type="evidence" value="ECO:0000314"/>
    <property type="project" value="UniProtKB"/>
</dbReference>
<dbReference type="GO" id="GO:0051015">
    <property type="term" value="F:actin filament binding"/>
    <property type="evidence" value="ECO:0000318"/>
    <property type="project" value="GO_Central"/>
</dbReference>
<dbReference type="GO" id="GO:0005509">
    <property type="term" value="F:calcium ion binding"/>
    <property type="evidence" value="ECO:0007669"/>
    <property type="project" value="InterPro"/>
</dbReference>
<dbReference type="GO" id="GO:0099103">
    <property type="term" value="F:channel activator activity"/>
    <property type="evidence" value="ECO:0000315"/>
    <property type="project" value="BHF-UCL"/>
</dbReference>
<dbReference type="GO" id="GO:0008092">
    <property type="term" value="F:cytoskeletal protein binding"/>
    <property type="evidence" value="ECO:0000314"/>
    <property type="project" value="UniProtKB"/>
</dbReference>
<dbReference type="GO" id="GO:0051373">
    <property type="term" value="F:FATZ binding"/>
    <property type="evidence" value="ECO:0000314"/>
    <property type="project" value="UniProtKB"/>
</dbReference>
<dbReference type="GO" id="GO:0042802">
    <property type="term" value="F:identical protein binding"/>
    <property type="evidence" value="ECO:0000353"/>
    <property type="project" value="UniProtKB"/>
</dbReference>
<dbReference type="GO" id="GO:0005178">
    <property type="term" value="F:integrin binding"/>
    <property type="evidence" value="ECO:0000304"/>
    <property type="project" value="UniProtKB"/>
</dbReference>
<dbReference type="GO" id="GO:0030274">
    <property type="term" value="F:LIM domain binding"/>
    <property type="evidence" value="ECO:0007669"/>
    <property type="project" value="Ensembl"/>
</dbReference>
<dbReference type="GO" id="GO:0005546">
    <property type="term" value="F:phosphatidylinositol-4,5-bisphosphate binding"/>
    <property type="evidence" value="ECO:0000314"/>
    <property type="project" value="UniProtKB"/>
</dbReference>
<dbReference type="GO" id="GO:0019904">
    <property type="term" value="F:protein domain specific binding"/>
    <property type="evidence" value="ECO:0000353"/>
    <property type="project" value="UniProtKB"/>
</dbReference>
<dbReference type="GO" id="GO:0008307">
    <property type="term" value="F:structural constituent of muscle"/>
    <property type="evidence" value="ECO:0000304"/>
    <property type="project" value="ProtInc"/>
</dbReference>
<dbReference type="GO" id="GO:0098973">
    <property type="term" value="F:structural constituent of postsynaptic actin cytoskeleton"/>
    <property type="evidence" value="ECO:0007669"/>
    <property type="project" value="Ensembl"/>
</dbReference>
<dbReference type="GO" id="GO:0031432">
    <property type="term" value="F:titin binding"/>
    <property type="evidence" value="ECO:0000353"/>
    <property type="project" value="BHF-UCL"/>
</dbReference>
<dbReference type="GO" id="GO:0070080">
    <property type="term" value="F:titin Z domain binding"/>
    <property type="evidence" value="ECO:0000315"/>
    <property type="project" value="UniProtKB"/>
</dbReference>
<dbReference type="GO" id="GO:0003713">
    <property type="term" value="F:transcription coactivator activity"/>
    <property type="evidence" value="ECO:0007669"/>
    <property type="project" value="Ensembl"/>
</dbReference>
<dbReference type="GO" id="GO:0044325">
    <property type="term" value="F:transmembrane transporter binding"/>
    <property type="evidence" value="ECO:0000353"/>
    <property type="project" value="UniProtKB"/>
</dbReference>
<dbReference type="GO" id="GO:0030036">
    <property type="term" value="P:actin cytoskeleton organization"/>
    <property type="evidence" value="ECO:0000318"/>
    <property type="project" value="GO_Central"/>
</dbReference>
<dbReference type="GO" id="GO:0051695">
    <property type="term" value="P:actin filament uncapping"/>
    <property type="evidence" value="ECO:0000315"/>
    <property type="project" value="UniProtKB"/>
</dbReference>
<dbReference type="GO" id="GO:0055013">
    <property type="term" value="P:cardiac muscle cell development"/>
    <property type="evidence" value="ECO:0007669"/>
    <property type="project" value="Ensembl"/>
</dbReference>
<dbReference type="GO" id="GO:0007155">
    <property type="term" value="P:cell adhesion"/>
    <property type="evidence" value="ECO:0000304"/>
    <property type="project" value="UniProtKB"/>
</dbReference>
<dbReference type="GO" id="GO:0048041">
    <property type="term" value="P:focal adhesion assembly"/>
    <property type="evidence" value="ECO:0000315"/>
    <property type="project" value="UniProtKB"/>
</dbReference>
<dbReference type="GO" id="GO:0030035">
    <property type="term" value="P:microspike assembly"/>
    <property type="evidence" value="ECO:0000314"/>
    <property type="project" value="UniProtKB"/>
</dbReference>
<dbReference type="GO" id="GO:0055001">
    <property type="term" value="P:muscle cell development"/>
    <property type="evidence" value="ECO:0000318"/>
    <property type="project" value="GO_Central"/>
</dbReference>
<dbReference type="GO" id="GO:0043267">
    <property type="term" value="P:negative regulation of potassium ion transport"/>
    <property type="evidence" value="ECO:0000315"/>
    <property type="project" value="BHF-UCL"/>
</dbReference>
<dbReference type="GO" id="GO:2000009">
    <property type="term" value="P:negative regulation of protein localization to cell surface"/>
    <property type="evidence" value="ECO:0000315"/>
    <property type="project" value="BHF-UCL"/>
</dbReference>
<dbReference type="GO" id="GO:0086097">
    <property type="term" value="P:phospholipase C-activating angiotensin-activated signaling pathway"/>
    <property type="evidence" value="ECO:0000315"/>
    <property type="project" value="UniProtKB"/>
</dbReference>
<dbReference type="GO" id="GO:2001259">
    <property type="term" value="P:positive regulation of cation channel activity"/>
    <property type="evidence" value="ECO:0000315"/>
    <property type="project" value="UniProtKB"/>
</dbReference>
<dbReference type="GO" id="GO:2001137">
    <property type="term" value="P:positive regulation of endocytic recycling"/>
    <property type="evidence" value="ECO:0000315"/>
    <property type="project" value="UniProtKB"/>
</dbReference>
<dbReference type="GO" id="GO:0043268">
    <property type="term" value="P:positive regulation of potassium ion transport"/>
    <property type="evidence" value="ECO:0000314"/>
    <property type="project" value="BHF-UCL"/>
</dbReference>
<dbReference type="GO" id="GO:0072659">
    <property type="term" value="P:protein localization to plasma membrane"/>
    <property type="evidence" value="ECO:0000315"/>
    <property type="project" value="UniProtKB"/>
</dbReference>
<dbReference type="GO" id="GO:0042981">
    <property type="term" value="P:regulation of apoptotic process"/>
    <property type="evidence" value="ECO:0000303"/>
    <property type="project" value="UniProtKB"/>
</dbReference>
<dbReference type="GO" id="GO:0042391">
    <property type="term" value="P:regulation of membrane potential"/>
    <property type="evidence" value="ECO:0000315"/>
    <property type="project" value="BHF-UCL"/>
</dbReference>
<dbReference type="GO" id="GO:0045214">
    <property type="term" value="P:sarcomere organization"/>
    <property type="evidence" value="ECO:0000315"/>
    <property type="project" value="UniProtKB"/>
</dbReference>
<dbReference type="CDD" id="cd21214">
    <property type="entry name" value="CH_ACTN_rpt1"/>
    <property type="match status" value="1"/>
</dbReference>
<dbReference type="CDD" id="cd21216">
    <property type="entry name" value="CH_ACTN_rpt2"/>
    <property type="match status" value="1"/>
</dbReference>
<dbReference type="CDD" id="cd00051">
    <property type="entry name" value="EFh"/>
    <property type="match status" value="1"/>
</dbReference>
<dbReference type="CDD" id="cd00176">
    <property type="entry name" value="SPEC"/>
    <property type="match status" value="1"/>
</dbReference>
<dbReference type="FunFam" id="1.10.238.10:FF:000004">
    <property type="entry name" value="Actinin alpha 1"/>
    <property type="match status" value="1"/>
</dbReference>
<dbReference type="FunFam" id="1.10.418.10:FF:000001">
    <property type="entry name" value="Actinin alpha 1"/>
    <property type="match status" value="1"/>
</dbReference>
<dbReference type="FunFam" id="1.20.58.60:FF:000004">
    <property type="entry name" value="Actinin alpha 1"/>
    <property type="match status" value="1"/>
</dbReference>
<dbReference type="FunFam" id="1.20.58.60:FF:000005">
    <property type="entry name" value="Actinin alpha 1"/>
    <property type="match status" value="1"/>
</dbReference>
<dbReference type="FunFam" id="1.10.418.10:FF:000005">
    <property type="entry name" value="Actinin alpha 4"/>
    <property type="match status" value="1"/>
</dbReference>
<dbReference type="FunFam" id="1.10.238.10:FF:000018">
    <property type="entry name" value="Actinin, alpha 1"/>
    <property type="match status" value="1"/>
</dbReference>
<dbReference type="FunFam" id="1.20.58.60:FF:000002">
    <property type="entry name" value="Actinin, alpha 1"/>
    <property type="match status" value="1"/>
</dbReference>
<dbReference type="FunFam" id="1.20.58.60:FF:000003">
    <property type="entry name" value="Actinin, alpha 1"/>
    <property type="match status" value="1"/>
</dbReference>
<dbReference type="Gene3D" id="1.20.58.60">
    <property type="match status" value="4"/>
</dbReference>
<dbReference type="Gene3D" id="1.10.418.10">
    <property type="entry name" value="Calponin-like domain"/>
    <property type="match status" value="2"/>
</dbReference>
<dbReference type="Gene3D" id="1.10.238.10">
    <property type="entry name" value="EF-hand"/>
    <property type="match status" value="2"/>
</dbReference>
<dbReference type="InterPro" id="IPR001589">
    <property type="entry name" value="Actinin_actin-bd_CS"/>
</dbReference>
<dbReference type="InterPro" id="IPR001715">
    <property type="entry name" value="CH_dom"/>
</dbReference>
<dbReference type="InterPro" id="IPR036872">
    <property type="entry name" value="CH_dom_sf"/>
</dbReference>
<dbReference type="InterPro" id="IPR011992">
    <property type="entry name" value="EF-hand-dom_pair"/>
</dbReference>
<dbReference type="InterPro" id="IPR014837">
    <property type="entry name" value="EF-hand_Ca_insen"/>
</dbReference>
<dbReference type="InterPro" id="IPR002048">
    <property type="entry name" value="EF_hand_dom"/>
</dbReference>
<dbReference type="InterPro" id="IPR018159">
    <property type="entry name" value="Spectrin/alpha-actinin"/>
</dbReference>
<dbReference type="InterPro" id="IPR002017">
    <property type="entry name" value="Spectrin_repeat"/>
</dbReference>
<dbReference type="PANTHER" id="PTHR11915">
    <property type="entry name" value="SPECTRIN/FILAMIN RELATED CYTOSKELETAL PROTEIN"/>
    <property type="match status" value="1"/>
</dbReference>
<dbReference type="Pfam" id="PF00307">
    <property type="entry name" value="CH"/>
    <property type="match status" value="2"/>
</dbReference>
<dbReference type="Pfam" id="PF13499">
    <property type="entry name" value="EF-hand_7"/>
    <property type="match status" value="1"/>
</dbReference>
<dbReference type="Pfam" id="PF08726">
    <property type="entry name" value="EFhand_Ca_insen"/>
    <property type="match status" value="1"/>
</dbReference>
<dbReference type="Pfam" id="PF00435">
    <property type="entry name" value="Spectrin"/>
    <property type="match status" value="4"/>
</dbReference>
<dbReference type="SMART" id="SM00033">
    <property type="entry name" value="CH"/>
    <property type="match status" value="2"/>
</dbReference>
<dbReference type="SMART" id="SM00054">
    <property type="entry name" value="EFh"/>
    <property type="match status" value="2"/>
</dbReference>
<dbReference type="SMART" id="SM01184">
    <property type="entry name" value="efhand_Ca_insen"/>
    <property type="match status" value="1"/>
</dbReference>
<dbReference type="SMART" id="SM00150">
    <property type="entry name" value="SPEC"/>
    <property type="match status" value="3"/>
</dbReference>
<dbReference type="SUPFAM" id="SSF47576">
    <property type="entry name" value="Calponin-homology domain, CH-domain"/>
    <property type="match status" value="1"/>
</dbReference>
<dbReference type="SUPFAM" id="SSF47473">
    <property type="entry name" value="EF-hand"/>
    <property type="match status" value="1"/>
</dbReference>
<dbReference type="SUPFAM" id="SSF46966">
    <property type="entry name" value="Spectrin repeat"/>
    <property type="match status" value="4"/>
</dbReference>
<dbReference type="PROSITE" id="PS00019">
    <property type="entry name" value="ACTININ_1"/>
    <property type="match status" value="1"/>
</dbReference>
<dbReference type="PROSITE" id="PS00020">
    <property type="entry name" value="ACTININ_2"/>
    <property type="match status" value="1"/>
</dbReference>
<dbReference type="PROSITE" id="PS50021">
    <property type="entry name" value="CH"/>
    <property type="match status" value="2"/>
</dbReference>
<dbReference type="PROSITE" id="PS50222">
    <property type="entry name" value="EF_HAND_2"/>
    <property type="match status" value="2"/>
</dbReference>
<proteinExistence type="evidence at protein level"/>
<feature type="chain" id="PRO_0000073435" description="Alpha-actinin-2">
    <location>
        <begin position="1"/>
        <end position="894"/>
    </location>
</feature>
<feature type="domain" description="Calponin-homology (CH) 1" evidence="2">
    <location>
        <begin position="38"/>
        <end position="142"/>
    </location>
</feature>
<feature type="domain" description="Calponin-homology (CH) 2" evidence="2">
    <location>
        <begin position="151"/>
        <end position="257"/>
    </location>
</feature>
<feature type="repeat" description="Spectrin 1">
    <location>
        <begin position="281"/>
        <end position="391"/>
    </location>
</feature>
<feature type="repeat" description="Spectrin 2">
    <location>
        <begin position="401"/>
        <end position="506"/>
    </location>
</feature>
<feature type="repeat" description="Spectrin 3">
    <location>
        <begin position="516"/>
        <end position="627"/>
    </location>
</feature>
<feature type="repeat" description="Spectrin 4">
    <location>
        <begin position="637"/>
        <end position="740"/>
    </location>
</feature>
<feature type="domain" description="EF-hand 1" evidence="3">
    <location>
        <begin position="753"/>
        <end position="788"/>
    </location>
</feature>
<feature type="domain" description="EF-hand 2" evidence="3">
    <location>
        <begin position="789"/>
        <end position="824"/>
    </location>
</feature>
<feature type="region of interest" description="Actin-binding">
    <location>
        <begin position="1"/>
        <end position="254"/>
    </location>
</feature>
<feature type="binding site" evidence="21">
    <location>
        <position position="766"/>
    </location>
    <ligand>
        <name>Ca(2+)</name>
        <dbReference type="ChEBI" id="CHEBI:29108"/>
        <label>1</label>
    </ligand>
</feature>
<feature type="binding site" evidence="21">
    <location>
        <position position="770"/>
    </location>
    <ligand>
        <name>Ca(2+)</name>
        <dbReference type="ChEBI" id="CHEBI:29108"/>
        <label>1</label>
    </ligand>
</feature>
<feature type="binding site" evidence="21">
    <location>
        <position position="777"/>
    </location>
    <ligand>
        <name>Ca(2+)</name>
        <dbReference type="ChEBI" id="CHEBI:29108"/>
        <label>1</label>
    </ligand>
</feature>
<feature type="binding site" evidence="21">
    <location>
        <position position="802"/>
    </location>
    <ligand>
        <name>Ca(2+)</name>
        <dbReference type="ChEBI" id="CHEBI:29108"/>
        <label>2</label>
    </ligand>
</feature>
<feature type="binding site" evidence="21">
    <location>
        <position position="804"/>
    </location>
    <ligand>
        <name>Ca(2+)</name>
        <dbReference type="ChEBI" id="CHEBI:29108"/>
        <label>2</label>
    </ligand>
</feature>
<feature type="binding site" evidence="21">
    <location>
        <position position="808"/>
    </location>
    <ligand>
        <name>Ca(2+)</name>
        <dbReference type="ChEBI" id="CHEBI:29108"/>
        <label>2</label>
    </ligand>
</feature>
<feature type="modified residue" description="Phosphothreonine" evidence="1">
    <location>
        <position position="237"/>
    </location>
</feature>
<feature type="splice variant" id="VSP_054923" description="In isoform 2." evidence="20">
    <original>IVNTPKPDERAIMTYVSCFYHAFAGAEQ</original>
    <variation>LVYTARPDERAIMTYVSCYYHAFAGAQK</variation>
    <location>
        <begin position="234"/>
        <end position="261"/>
    </location>
</feature>
<feature type="sequence variant" id="VAR_054628" description="In CMD1AA; dbSNP:rs121434525." evidence="9">
    <original>Q</original>
    <variation>R</variation>
    <location>
        <position position="9"/>
    </location>
</feature>
<feature type="sequence variant" id="VAR_071970" description="In CMH23 and CMD1AA; dbSNP:rs727502886." evidence="13 16">
    <original>A</original>
    <variation>T</variation>
    <location>
        <position position="119"/>
    </location>
</feature>
<feature type="sequence variant" id="VAR_083364" description="In MPD6; uncertain significance; dbSNP:rs1572114611." evidence="18">
    <original>L</original>
    <variation>P</variation>
    <location>
        <position position="131"/>
    </location>
</feature>
<feature type="sequence variant" id="VAR_074292" description="In CMH23; dbSNP:rs786205144." evidence="15">
    <original>M</original>
    <variation>T</variation>
    <location>
        <position position="228"/>
    </location>
</feature>
<feature type="sequence variant" id="VAR_083365" description="In MPD6; dbSNP:rs1572140109." evidence="18">
    <original>C</original>
    <variation>R</variation>
    <location>
        <position position="487"/>
    </location>
</feature>
<feature type="sequence variant" id="VAR_071971" description="In CMH23; dbSNP:rs200248944." evidence="13">
    <original>T</original>
    <variation>M</variation>
    <location>
        <position position="495"/>
    </location>
</feature>
<feature type="sequence variant" id="VAR_089760" description="Found in patients with autosomal recessive myopathy and asymmetric muscle weakness without significant cardiac or respiratory involvement; likely pathogenic; dbSNP:rs794728967." evidence="19">
    <original>R</original>
    <variation>G</variation>
    <location>
        <position position="506"/>
    </location>
</feature>
<feature type="sequence variant" id="VAR_071972" description="In CMH23; dbSNP:rs200631005." evidence="13">
    <original>E</original>
    <variation>A</variation>
    <location>
        <position position="583"/>
    </location>
</feature>
<feature type="sequence variant" id="VAR_033487" description="In dbSNP:rs35997569." evidence="9">
    <original>M</original>
    <variation>V</variation>
    <location>
        <position position="604"/>
    </location>
</feature>
<feature type="sequence variant" id="VAR_071973" description="In CMH23; dbSNP:rs786204951." evidence="13">
    <original>E</original>
    <variation>G</variation>
    <location>
        <position position="628"/>
    </location>
</feature>
<feature type="sequence variant" id="VAR_083366" description="In CMYO8; dbSNP:rs1572148902." evidence="17">
    <original>L</original>
    <variation>R</variation>
    <location>
        <position position="727"/>
    </location>
</feature>
<feature type="sequence variant" id="VAR_083367" description="In CMYO8; uncertain significance." evidence="17">
    <location>
        <begin position="732"/>
        <end position="742"/>
    </location>
</feature>
<feature type="helix" evidence="25">
    <location>
        <begin position="21"/>
        <end position="29"/>
    </location>
</feature>
<feature type="helix" evidence="26">
    <location>
        <begin position="32"/>
        <end position="52"/>
    </location>
</feature>
<feature type="helix" evidence="26">
    <location>
        <begin position="53"/>
        <end position="55"/>
    </location>
</feature>
<feature type="turn" evidence="26">
    <location>
        <begin position="62"/>
        <end position="68"/>
    </location>
</feature>
<feature type="helix" evidence="26">
    <location>
        <begin position="70"/>
        <end position="80"/>
    </location>
</feature>
<feature type="strand" evidence="25">
    <location>
        <begin position="90"/>
        <end position="92"/>
    </location>
</feature>
<feature type="helix" evidence="26">
    <location>
        <begin position="93"/>
        <end position="109"/>
    </location>
</feature>
<feature type="helix" evidence="26">
    <location>
        <begin position="119"/>
        <end position="123"/>
    </location>
</feature>
<feature type="helix" evidence="26">
    <location>
        <begin position="127"/>
        <end position="142"/>
    </location>
</feature>
<feature type="turn" evidence="26">
    <location>
        <begin position="143"/>
        <end position="145"/>
    </location>
</feature>
<feature type="helix" evidence="26">
    <location>
        <begin position="153"/>
        <end position="165"/>
    </location>
</feature>
<feature type="strand" evidence="26">
    <location>
        <begin position="175"/>
        <end position="177"/>
    </location>
</feature>
<feature type="helix" evidence="26">
    <location>
        <begin position="178"/>
        <end position="180"/>
    </location>
</feature>
<feature type="helix" evidence="26">
    <location>
        <begin position="184"/>
        <end position="193"/>
    </location>
</feature>
<feature type="turn" evidence="26">
    <location>
        <begin position="195"/>
        <end position="197"/>
    </location>
</feature>
<feature type="helix" evidence="26">
    <location>
        <begin position="200"/>
        <end position="202"/>
    </location>
</feature>
<feature type="helix" evidence="26">
    <location>
        <begin position="208"/>
        <end position="222"/>
    </location>
</feature>
<feature type="helix" evidence="26">
    <location>
        <begin position="231"/>
        <end position="236"/>
    </location>
</feature>
<feature type="strand" evidence="26">
    <location>
        <begin position="237"/>
        <end position="239"/>
    </location>
</feature>
<feature type="helix" evidence="26">
    <location>
        <begin position="242"/>
        <end position="256"/>
    </location>
</feature>
<feature type="helix" evidence="28">
    <location>
        <begin position="274"/>
        <end position="277"/>
    </location>
</feature>
<feature type="helix" evidence="28">
    <location>
        <begin position="280"/>
        <end position="304"/>
    </location>
</feature>
<feature type="helix" evidence="28">
    <location>
        <begin position="313"/>
        <end position="328"/>
    </location>
</feature>
<feature type="helix" evidence="28">
    <location>
        <begin position="331"/>
        <end position="354"/>
    </location>
</feature>
<feature type="helix" evidence="22">
    <location>
        <begin position="364"/>
        <end position="366"/>
    </location>
</feature>
<feature type="helix" evidence="28">
    <location>
        <begin position="368"/>
        <end position="383"/>
    </location>
</feature>
<feature type="strand" evidence="24">
    <location>
        <begin position="389"/>
        <end position="392"/>
    </location>
</feature>
<feature type="helix" evidence="23">
    <location>
        <begin position="393"/>
        <end position="416"/>
    </location>
</feature>
<feature type="turn" evidence="23">
    <location>
        <begin position="417"/>
        <end position="419"/>
    </location>
</feature>
<feature type="helix" evidence="23">
    <location>
        <begin position="420"/>
        <end position="425"/>
    </location>
</feature>
<feature type="helix" evidence="28">
    <location>
        <begin position="428"/>
        <end position="431"/>
    </location>
</feature>
<feature type="helix" evidence="23">
    <location>
        <begin position="434"/>
        <end position="470"/>
    </location>
</feature>
<feature type="helix" evidence="23">
    <location>
        <begin position="476"/>
        <end position="536"/>
    </location>
</feature>
<feature type="turn" evidence="23">
    <location>
        <begin position="537"/>
        <end position="540"/>
    </location>
</feature>
<feature type="turn" evidence="23">
    <location>
        <begin position="548"/>
        <end position="550"/>
    </location>
</feature>
<feature type="helix" evidence="23">
    <location>
        <begin position="551"/>
        <end position="562"/>
    </location>
</feature>
<feature type="helix" evidence="23">
    <location>
        <begin position="564"/>
        <end position="588"/>
    </location>
</feature>
<feature type="helix" evidence="23">
    <location>
        <begin position="604"/>
        <end position="632"/>
    </location>
</feature>
<feature type="turn" evidence="22">
    <location>
        <begin position="666"/>
        <end position="669"/>
    </location>
</feature>
<feature type="helix" evidence="28">
    <location>
        <begin position="671"/>
        <end position="704"/>
    </location>
</feature>
<feature type="helix" evidence="28">
    <location>
        <begin position="717"/>
        <end position="745"/>
    </location>
</feature>
<feature type="helix" evidence="24">
    <location>
        <begin position="753"/>
        <end position="762"/>
    </location>
</feature>
<feature type="strand" evidence="24">
    <location>
        <begin position="767"/>
        <end position="770"/>
    </location>
</feature>
<feature type="helix" evidence="24">
    <location>
        <begin position="777"/>
        <end position="784"/>
    </location>
</feature>
<feature type="helix" evidence="24">
    <location>
        <begin position="794"/>
        <end position="799"/>
    </location>
</feature>
<feature type="helix" evidence="24">
    <location>
        <begin position="812"/>
        <end position="820"/>
    </location>
</feature>
<feature type="helix" evidence="27">
    <location>
        <begin position="825"/>
        <end position="838"/>
    </location>
</feature>
<feature type="turn" evidence="27">
    <location>
        <begin position="839"/>
        <end position="841"/>
    </location>
</feature>
<feature type="strand" evidence="27">
    <location>
        <begin position="843"/>
        <end position="845"/>
    </location>
</feature>
<feature type="helix" evidence="27">
    <location>
        <begin position="847"/>
        <end position="853"/>
    </location>
</feature>
<feature type="helix" evidence="27">
    <location>
        <begin position="856"/>
        <end position="865"/>
    </location>
</feature>
<feature type="strand" evidence="24">
    <location>
        <begin position="871"/>
        <end position="873"/>
    </location>
</feature>
<feature type="helix" evidence="27">
    <location>
        <begin position="881"/>
        <end position="889"/>
    </location>
</feature>
<comment type="function">
    <text>F-actin cross-linking protein which is thought to anchor actin to a variety of intracellular structures. This is a bundling protein.</text>
</comment>
<comment type="subunit">
    <text evidence="4 5 6 7 8 10 11 12">Homodimer; antiparallel. Also forms heterodimers with ACTN3. Interacts with ADAM12, MYOZ1, MYOZ2 and MYOZ3. Interacts via its C-terminal region with the LDB3 PDZ domain. Interacts with XIRP2. Interacts with DST isoform 1 (via N-terminus). Interacts with PARVB. Interacts with SYNPO2.</text>
</comment>
<comment type="interaction">
    <interactant intactId="EBI-77797">
        <id>P35609</id>
    </interactant>
    <interactant intactId="EBI-351710">
        <id>P12814</id>
        <label>ACTN1</label>
    </interactant>
    <organismsDiffer>false</organismsDiffer>
    <experiments>3</experiments>
</comment>
<comment type="interaction">
    <interactant intactId="EBI-77797">
        <id>P35609</id>
    </interactant>
    <interactant intactId="EBI-77797">
        <id>P35609</id>
        <label>ACTN2</label>
    </interactant>
    <organismsDiffer>false</organismsDiffer>
    <experiments>11</experiments>
</comment>
<comment type="interaction">
    <interactant intactId="EBI-77797">
        <id>P35609</id>
    </interactant>
    <interactant intactId="EBI-525291">
        <id>P03950</id>
        <label>ANG</label>
    </interactant>
    <organismsDiffer>false</organismsDiffer>
    <experiments>4</experiments>
</comment>
<comment type="interaction">
    <interactant intactId="EBI-77797">
        <id>P35609</id>
    </interactant>
    <interactant intactId="EBI-12698369">
        <id>O43827</id>
        <label>ANGPTL7</label>
    </interactant>
    <organismsDiffer>false</organismsDiffer>
    <experiments>3</experiments>
</comment>
<comment type="interaction">
    <interactant intactId="EBI-77797">
        <id>P35609</id>
    </interactant>
    <interactant intactId="EBI-10194585">
        <id>P05496</id>
        <label>ATP5MC1</label>
    </interactant>
    <organismsDiffer>false</organismsDiffer>
    <experiments>3</experiments>
</comment>
<comment type="interaction">
    <interactant intactId="EBI-77797">
        <id>P35609</id>
    </interactant>
    <interactant intactId="EBI-700771">
        <id>Q92934</id>
        <label>BAD</label>
    </interactant>
    <organismsDiffer>false</organismsDiffer>
    <experiments>3</experiments>
</comment>
<comment type="interaction">
    <interactant intactId="EBI-77797">
        <id>P35609</id>
    </interactant>
    <interactant intactId="EBI-5666615">
        <id>Q5PSV4</id>
        <label>BRMS1L</label>
    </interactant>
    <organismsDiffer>false</organismsDiffer>
    <experiments>7</experiments>
</comment>
<comment type="interaction">
    <interactant intactId="EBI-77797">
        <id>P35609</id>
    </interactant>
    <interactant intactId="EBI-520729">
        <id>P26842</id>
        <label>CD27</label>
    </interactant>
    <organismsDiffer>false</organismsDiffer>
    <experiments>3</experiments>
</comment>
<comment type="interaction">
    <interactant intactId="EBI-77797">
        <id>P35609</id>
    </interactant>
    <interactant intactId="EBI-12010090">
        <id>A8MYP8</id>
        <label>CIMAP1B</label>
    </interactant>
    <organismsDiffer>false</organismsDiffer>
    <experiments>3</experiments>
</comment>
<comment type="interaction">
    <interactant intactId="EBI-77797">
        <id>P35609</id>
    </interactant>
    <interactant intactId="EBI-12703404">
        <id>Q8WXI8</id>
        <label>CLEC4D</label>
    </interactant>
    <organismsDiffer>false</organismsDiffer>
    <experiments>3</experiments>
</comment>
<comment type="interaction">
    <interactant intactId="EBI-77797">
        <id>P35609</id>
    </interactant>
    <interactant intactId="EBI-741032">
        <id>Q8NE01</id>
        <label>CNNM3</label>
    </interactant>
    <organismsDiffer>false</organismsDiffer>
    <experiments>3</experiments>
</comment>
<comment type="interaction">
    <interactant intactId="EBI-77797">
        <id>P35609</id>
    </interactant>
    <interactant intactId="EBI-10204806">
        <id>P29373</id>
        <label>CRABP2</label>
    </interactant>
    <organismsDiffer>false</organismsDiffer>
    <experiments>3</experiments>
</comment>
<comment type="interaction">
    <interactant intactId="EBI-77797">
        <id>P35609</id>
    </interactant>
    <interactant intactId="EBI-520375">
        <id>P78560</id>
        <label>CRADD</label>
    </interactant>
    <organismsDiffer>false</organismsDiffer>
    <experiments>3</experiments>
</comment>
<comment type="interaction">
    <interactant intactId="EBI-77797">
        <id>P35609</id>
    </interactant>
    <interactant intactId="EBI-5658719">
        <id>P50461</id>
        <label>CSRP3</label>
    </interactant>
    <organismsDiffer>false</organismsDiffer>
    <experiments>4</experiments>
</comment>
<comment type="interaction">
    <interactant intactId="EBI-77797">
        <id>P35609</id>
    </interactant>
    <interactant intactId="EBI-529989">
        <id>Q9NRI5</id>
        <label>DISC1</label>
    </interactant>
    <organismsDiffer>false</organismsDiffer>
    <experiments>4</experiments>
</comment>
<comment type="interaction">
    <interactant intactId="EBI-77797">
        <id>P35609</id>
    </interactant>
    <interactant intactId="EBI-2692044">
        <id>Q8WW35</id>
        <label>DYNLT2B</label>
    </interactant>
    <organismsDiffer>false</organismsDiffer>
    <experiments>3</experiments>
</comment>
<comment type="interaction">
    <interactant intactId="EBI-77797">
        <id>P35609</id>
    </interactant>
    <interactant intactId="EBI-742802">
        <id>Q9Y247</id>
        <label>FAM50B</label>
    </interactant>
    <organismsDiffer>false</organismsDiffer>
    <experiments>3</experiments>
</comment>
<comment type="interaction">
    <interactant intactId="EBI-77797">
        <id>P35609</id>
    </interactant>
    <interactant intactId="EBI-24224082">
        <id>Q6P050</id>
        <label>FBXL22</label>
    </interactant>
    <organismsDiffer>false</organismsDiffer>
    <experiments>3</experiments>
</comment>
<comment type="interaction">
    <interactant intactId="EBI-77797">
        <id>P35609</id>
    </interactant>
    <interactant intactId="EBI-6664760">
        <id>P23771</id>
        <label>GATA3</label>
    </interactant>
    <organismsDiffer>false</organismsDiffer>
    <experiments>3</experiments>
</comment>
<comment type="interaction">
    <interactant intactId="EBI-77797">
        <id>P35609</id>
    </interactant>
    <interactant intactId="EBI-4403685">
        <id>Q7Z5G4</id>
        <label>GOLGA7</label>
    </interactant>
    <organismsDiffer>false</organismsDiffer>
    <experiments>3</experiments>
</comment>
<comment type="interaction">
    <interactant intactId="EBI-77797">
        <id>P35609</id>
    </interactant>
    <interactant intactId="EBI-8770084">
        <id>P30711</id>
        <label>GSTT1</label>
    </interactant>
    <organismsDiffer>false</organismsDiffer>
    <experiments>3</experiments>
</comment>
<comment type="interaction">
    <interactant intactId="EBI-77797">
        <id>P35609</id>
    </interactant>
    <interactant intactId="EBI-302023">
        <id>P62805</id>
        <label>H4C9</label>
    </interactant>
    <organismsDiffer>false</organismsDiffer>
    <experiments>3</experiments>
</comment>
<comment type="interaction">
    <interactant intactId="EBI-77797">
        <id>P35609</id>
    </interactant>
    <interactant intactId="EBI-1056863">
        <id>P28222</id>
        <label>HTR1B</label>
    </interactant>
    <organismsDiffer>false</organismsDiffer>
    <experiments>3</experiments>
</comment>
<comment type="interaction">
    <interactant intactId="EBI-77797">
        <id>P35609</id>
    </interactant>
    <interactant intactId="EBI-1044332">
        <id>Q8IYT4</id>
        <label>KATNAL2</label>
    </interactant>
    <organismsDiffer>false</organismsDiffer>
    <experiments>3</experiments>
</comment>
<comment type="interaction">
    <interactant intactId="EBI-77797">
        <id>P35609</id>
    </interactant>
    <interactant intactId="EBI-6426121">
        <id>P22460</id>
        <label>KCNA5</label>
    </interactant>
    <organismsDiffer>false</organismsDiffer>
    <experiments>6</experiments>
</comment>
<comment type="interaction">
    <interactant intactId="EBI-77797">
        <id>P35609</id>
    </interactant>
    <interactant intactId="EBI-6658875">
        <id>Q9H2S1</id>
        <label>KCNN2</label>
    </interactant>
    <organismsDiffer>false</organismsDiffer>
    <experiments>3</experiments>
</comment>
<comment type="interaction">
    <interactant intactId="EBI-77797">
        <id>P35609</id>
    </interactant>
    <interactant intactId="EBI-14086479">
        <id>Q8IVT4</id>
        <label>MGC50722</label>
    </interactant>
    <organismsDiffer>false</organismsDiffer>
    <experiments>3</experiments>
</comment>
<comment type="interaction">
    <interactant intactId="EBI-77797">
        <id>P35609</id>
    </interactant>
    <interactant intactId="EBI-2555563">
        <id>Q8IY33</id>
        <label>MICALL2</label>
    </interactant>
    <organismsDiffer>false</organismsDiffer>
    <experiments>7</experiments>
</comment>
<comment type="interaction">
    <interactant intactId="EBI-77797">
        <id>P35609</id>
    </interactant>
    <interactant intactId="EBI-1757866">
        <id>P00540</id>
        <label>MOS</label>
    </interactant>
    <organismsDiffer>false</organismsDiffer>
    <experiments>3</experiments>
</comment>
<comment type="interaction">
    <interactant intactId="EBI-77797">
        <id>P35609</id>
    </interactant>
    <interactant intactId="EBI-723524">
        <id>Q7Z7H8</id>
        <label>MRPL10</label>
    </interactant>
    <organismsDiffer>false</organismsDiffer>
    <experiments>3</experiments>
</comment>
<comment type="interaction">
    <interactant intactId="EBI-77797">
        <id>P35609</id>
    </interactant>
    <interactant intactId="EBI-16430371">
        <id>A0A0S2Z4Y0</id>
        <label>MYOT</label>
    </interactant>
    <organismsDiffer>false</organismsDiffer>
    <experiments>3</experiments>
</comment>
<comment type="interaction">
    <interactant intactId="EBI-77797">
        <id>P35609</id>
    </interactant>
    <interactant intactId="EBI-296701">
        <id>Q9UBF9</id>
        <label>MYOT</label>
    </interactant>
    <organismsDiffer>false</organismsDiffer>
    <experiments>3</experiments>
</comment>
<comment type="interaction">
    <interactant intactId="EBI-77797">
        <id>P35609</id>
    </interactant>
    <interactant intactId="EBI-746712">
        <id>Q9NPC6</id>
        <label>MYOZ2</label>
    </interactant>
    <organismsDiffer>false</organismsDiffer>
    <experiments>13</experiments>
</comment>
<comment type="interaction">
    <interactant intactId="EBI-77797">
        <id>P35609</id>
    </interactant>
    <interactant intactId="EBI-3920396">
        <id>Q6ZUT1</id>
        <label>NKAPD1</label>
    </interactant>
    <organismsDiffer>false</organismsDiffer>
    <experiments>3</experiments>
</comment>
<comment type="interaction">
    <interactant intactId="EBI-77797">
        <id>P35609</id>
    </interactant>
    <interactant intactId="EBI-5660292">
        <id>Q86VF7</id>
        <label>NRAP</label>
    </interactant>
    <organismsDiffer>false</organismsDiffer>
    <experiments>2</experiments>
</comment>
<comment type="interaction">
    <interactant intactId="EBI-77797">
        <id>P35609</id>
    </interactant>
    <interactant intactId="EBI-741158">
        <id>Q96HA8</id>
        <label>NTAQ1</label>
    </interactant>
    <organismsDiffer>false</organismsDiffer>
    <experiments>3</experiments>
</comment>
<comment type="interaction">
    <interactant intactId="EBI-77797">
        <id>P35609</id>
    </interactant>
    <interactant intactId="EBI-5658852">
        <id>Q53GG5</id>
        <label>PDLIM3</label>
    </interactant>
    <organismsDiffer>false</organismsDiffer>
    <experiments>6</experiments>
</comment>
<comment type="interaction">
    <interactant intactId="EBI-77797">
        <id>P35609</id>
    </interactant>
    <interactant intactId="EBI-12702438">
        <id>Q53GG5-2</id>
        <label>PDLIM3</label>
    </interactant>
    <organismsDiffer>false</organismsDiffer>
    <experiments>3</experiments>
</comment>
<comment type="interaction">
    <interactant intactId="EBI-77797">
        <id>P35609</id>
    </interactant>
    <interactant intactId="EBI-352350">
        <id>P62140</id>
        <label>PPP1CB</label>
    </interactant>
    <organismsDiffer>false</organismsDiffer>
    <experiments>3</experiments>
</comment>
<comment type="interaction">
    <interactant intactId="EBI-77797">
        <id>P35609</id>
    </interactant>
    <interactant intactId="EBI-359352">
        <id>P25786</id>
        <label>PSMA1</label>
    </interactant>
    <organismsDiffer>false</organismsDiffer>
    <experiments>3</experiments>
</comment>
<comment type="interaction">
    <interactant intactId="EBI-77797">
        <id>P35609</id>
    </interactant>
    <interactant intactId="EBI-347462">
        <id>P47897</id>
        <label>QARS1</label>
    </interactant>
    <organismsDiffer>false</organismsDiffer>
    <experiments>3</experiments>
</comment>
<comment type="interaction">
    <interactant intactId="EBI-77797">
        <id>P35609</id>
    </interactant>
    <interactant intactId="EBI-296739">
        <id>P63244</id>
        <label>RACK1</label>
    </interactant>
    <organismsDiffer>false</organismsDiffer>
    <experiments>3</experiments>
</comment>
<comment type="interaction">
    <interactant intactId="EBI-77797">
        <id>P35609</id>
    </interactant>
    <interactant intactId="EBI-366542">
        <id>O95059</id>
        <label>RPP14</label>
    </interactant>
    <organismsDiffer>false</organismsDiffer>
    <experiments>3</experiments>
</comment>
<comment type="interaction">
    <interactant intactId="EBI-77797">
        <id>P35609</id>
    </interactant>
    <interactant intactId="EBI-10217913">
        <id>Q14D33</id>
        <label>RTP5</label>
    </interactant>
    <organismsDiffer>false</organismsDiffer>
    <experiments>7</experiments>
</comment>
<comment type="interaction">
    <interactant intactId="EBI-77797">
        <id>P35609</id>
    </interactant>
    <interactant intactId="EBI-3957636">
        <id>Q8IYX7</id>
        <label>SAXO1</label>
    </interactant>
    <organismsDiffer>false</organismsDiffer>
    <experiments>7</experiments>
</comment>
<comment type="interaction">
    <interactant intactId="EBI-77797">
        <id>P35609</id>
    </interactant>
    <interactant intactId="EBI-1045459">
        <id>O95863</id>
        <label>SNAI1</label>
    </interactant>
    <organismsDiffer>false</organismsDiffer>
    <experiments>7</experiments>
</comment>
<comment type="interaction">
    <interactant intactId="EBI-77797">
        <id>P35609</id>
    </interactant>
    <interactant intactId="EBI-751145">
        <id>P23497</id>
        <label>SP100</label>
    </interactant>
    <organismsDiffer>false</organismsDiffer>
    <experiments>6</experiments>
</comment>
<comment type="interaction">
    <interactant intactId="EBI-77797">
        <id>P35609</id>
    </interactant>
    <interactant intactId="EBI-6589365">
        <id>P23497-2</id>
        <label>SP100</label>
    </interactant>
    <organismsDiffer>false</organismsDiffer>
    <experiments>3</experiments>
</comment>
<comment type="interaction">
    <interactant intactId="EBI-77797">
        <id>P35609</id>
    </interactant>
    <interactant intactId="EBI-1377865">
        <id>Q15506</id>
        <label>SPA17</label>
    </interactant>
    <organismsDiffer>false</organismsDiffer>
    <experiments>3</experiments>
</comment>
<comment type="interaction">
    <interactant intactId="EBI-77797">
        <id>P35609</id>
    </interactant>
    <interactant intactId="EBI-350743">
        <id>P49458</id>
        <label>SRP9</label>
    </interactant>
    <organismsDiffer>false</organismsDiffer>
    <experiments>3</experiments>
</comment>
<comment type="interaction">
    <interactant intactId="EBI-77797">
        <id>P35609</id>
    </interactant>
    <interactant intactId="EBI-12082116">
        <id>Q9H987-2</id>
        <label>SYNPO2L</label>
    </interactant>
    <organismsDiffer>false</organismsDiffer>
    <experiments>3</experiments>
</comment>
<comment type="interaction">
    <interactant intactId="EBI-77797">
        <id>P35609</id>
    </interactant>
    <interactant intactId="EBI-74615">
        <id>Q9H0E2</id>
        <label>TOLLIP</label>
    </interactant>
    <organismsDiffer>false</organismsDiffer>
    <experiments>3</experiments>
</comment>
<comment type="interaction">
    <interactant intactId="EBI-77797">
        <id>P35609</id>
    </interactant>
    <interactant intactId="EBI-681210">
        <id>Q8WZ42</id>
        <label>TTN</label>
    </interactant>
    <organismsDiffer>false</organismsDiffer>
    <experiments>16</experiments>
</comment>
<comment type="interaction">
    <interactant intactId="EBI-77797">
        <id>P35609</id>
    </interactant>
    <interactant intactId="EBI-743272">
        <id>O75604</id>
        <label>USP2</label>
    </interactant>
    <organismsDiffer>false</organismsDiffer>
    <experiments>3</experiments>
</comment>
<comment type="interaction">
    <interactant intactId="EBI-77797">
        <id>P35609</id>
    </interactant>
    <interactant intactId="EBI-11990572">
        <id>J3KMY6</id>
        <label>ZC2HC1C</label>
    </interactant>
    <organismsDiffer>false</organismsDiffer>
    <experiments>3</experiments>
</comment>
<comment type="interaction">
    <interactant intactId="EBI-77797">
        <id>P35609</id>
    </interactant>
    <interactant intactId="EBI-14104088">
        <id>Q53FD0-2</id>
        <label>ZC2HC1C</label>
    </interactant>
    <organismsDiffer>false</organismsDiffer>
    <experiments>3</experiments>
</comment>
<comment type="interaction">
    <interactant intactId="EBI-77797">
        <id>P35609</id>
    </interactant>
    <interactant intactId="EBI-741415">
        <id>O60232</id>
        <label>ZNRD2</label>
    </interactant>
    <organismsDiffer>false</organismsDiffer>
    <experiments>3</experiments>
</comment>
<comment type="interaction">
    <interactant intactId="EBI-77797">
        <id>P35609</id>
    </interactant>
    <interactant intactId="EBI-77785">
        <id>Q61824</id>
        <label>Adam12</label>
    </interactant>
    <organismsDiffer>true</organismsDiffer>
    <experiments>3</experiments>
</comment>
<comment type="subcellular location">
    <subcellularLocation>
        <location evidence="7 12 17">Cytoplasm</location>
        <location evidence="7 12 17">Myofibril</location>
        <location evidence="7 12 17">Sarcomere</location>
        <location evidence="7 12 17">Z line</location>
    </subcellularLocation>
    <text>Colocalizes with MYOZ1 and FLNC at the Z-lines of skeletal muscle.</text>
</comment>
<comment type="alternative products">
    <event type="alternative splicing"/>
    <isoform>
        <id>P35609-1</id>
        <name>1</name>
        <sequence type="displayed"/>
    </isoform>
    <isoform>
        <id>P35609-2</id>
        <name>2</name>
        <sequence type="described" ref="VSP_054923"/>
    </isoform>
</comment>
<comment type="tissue specificity">
    <text>Expressed in both skeletal and cardiac muscle.</text>
</comment>
<comment type="PTM">
    <text evidence="14">Ubiquitinated by FBXL22, leading to proteasomal degradation.</text>
</comment>
<comment type="disease" evidence="13 15">
    <disease id="DI-04440">
        <name>Cardiomyopathy, familial hypertrophic, 23, with or without left ventricular non-compaction</name>
        <acronym>CMH23</acronym>
        <description>A hereditary heart disorder characterized by ventricular hypertrophy, which is usually asymmetric and often involves the interventricular septum. The symptoms include dyspnea, syncope, collapse, palpitations, and chest pain. They can be readily provoked by exercise. The disorder has inter- and intrafamilial variability ranging from benign to malignant forms with high risk of cardiac failure and sudden cardiac death.</description>
        <dbReference type="MIM" id="612158"/>
    </disease>
    <text>The disease is caused by variants affecting the gene represented in this entry.</text>
</comment>
<comment type="disease" evidence="9 16">
    <disease id="DI-00211">
        <name>Cardiomyopathy, dilated, 1AA, with or without left ventricular non-compaction</name>
        <acronym>CMD1AA</acronym>
        <description>A disorder characterized by ventricular dilation and impaired systolic function, resulting in congestive heart failure and arrhythmia. Patients are at risk of premature death.</description>
        <dbReference type="MIM" id="612158"/>
    </disease>
    <text>The disease is caused by variants affecting the gene represented in this entry.</text>
</comment>
<comment type="disease" evidence="17">
    <disease id="DI-05700">
        <name>Congenital myopathy 8</name>
        <acronym>CMYO8</acronym>
        <description>An autosomal dominant muscular disorder characterized by progressive early-onset muscle weakness, gait difficulties, loss of ambulation, and respiratory insufficiency. Morphological and ultrastructural analyses of muscle biopsies reveal type 1 fiber predominance, multiple structured cores forming a circular arrangement beneath the sarcolemma, and jagged Z-lines.</description>
        <dbReference type="MIM" id="618654"/>
    </disease>
    <text>The disease is caused by variants affecting the gene represented in this entry.</text>
</comment>
<comment type="disease" evidence="18">
    <disease id="DI-05701">
        <name>Myopathy, distal, 6, adult onset, autosomal dominant</name>
        <acronym>MPD6</acronym>
        <description>An autosomal dominant muscular disorder characterized by adult onset of asymmetric distal muscle weakness, primarily affecting the lower limbs and resulting in gait difficulties. Some patients develop involvement of proximal and upper limb muscles.</description>
        <dbReference type="MIM" id="618655"/>
    </disease>
    <text>The disease is caused by variants affecting the gene represented in this entry.</text>
</comment>
<comment type="disease">
    <text evidence="19">Defects in ACTN2 may be the cause of an autosomal recessive myopathy characterized by asymmetric, progressive muscle weakness predominantly affecting the lower extremities. Patients do not manifest cardiomyopathy or respiratory insufficiency. Muscle biopsy reveals disruption of the inter-myofibrillar architecture, type I fiber predominance and atrophy.</text>
</comment>
<comment type="similarity">
    <text evidence="21">Belongs to the alpha-actinin family.</text>
</comment>
<reference key="1">
    <citation type="journal article" date="1992" name="J. Biol. Chem.">
        <title>Cloning and characterization of two human skeletal muscle alpha-actinin genes located on chromosomes 1 and 11.</title>
        <authorList>
            <person name="Beggs A.H."/>
            <person name="Byers T.J."/>
            <person name="Knoll J.H.M."/>
            <person name="Boyce F.M."/>
            <person name="Bruns G.A.P."/>
            <person name="Kunkel L.M."/>
        </authorList>
    </citation>
    <scope>NUCLEOTIDE SEQUENCE [GENOMIC DNA / MRNA] (ISOFORM 1)</scope>
    <source>
        <tissue>Skeletal muscle</tissue>
    </source>
</reference>
<reference key="2">
    <citation type="journal article" date="1999" name="Biochem. Biophys. Res. Commun.">
        <title>Fine mapping and genomic structure of ACTN2, the human gene coding for the sarcomeric isoform of alpha-actinin-2, expressed in skeletal and cardiac muscle.</title>
        <authorList>
            <person name="Tiso N."/>
            <person name="Majetti M."/>
            <person name="Stanchi F."/>
            <person name="Rampazzo A."/>
            <person name="Zimbello R."/>
            <person name="Nava A."/>
            <person name="Danieli G.A."/>
        </authorList>
    </citation>
    <scope>NUCLEOTIDE SEQUENCE [GENOMIC DNA]</scope>
</reference>
<reference key="3">
    <citation type="journal article" date="2004" name="Nat. Genet.">
        <title>Complete sequencing and characterization of 21,243 full-length human cDNAs.</title>
        <authorList>
            <person name="Ota T."/>
            <person name="Suzuki Y."/>
            <person name="Nishikawa T."/>
            <person name="Otsuki T."/>
            <person name="Sugiyama T."/>
            <person name="Irie R."/>
            <person name="Wakamatsu A."/>
            <person name="Hayashi K."/>
            <person name="Sato H."/>
            <person name="Nagai K."/>
            <person name="Kimura K."/>
            <person name="Makita H."/>
            <person name="Sekine M."/>
            <person name="Obayashi M."/>
            <person name="Nishi T."/>
            <person name="Shibahara T."/>
            <person name="Tanaka T."/>
            <person name="Ishii S."/>
            <person name="Yamamoto J."/>
            <person name="Saito K."/>
            <person name="Kawai Y."/>
            <person name="Isono Y."/>
            <person name="Nakamura Y."/>
            <person name="Nagahari K."/>
            <person name="Murakami K."/>
            <person name="Yasuda T."/>
            <person name="Iwayanagi T."/>
            <person name="Wagatsuma M."/>
            <person name="Shiratori A."/>
            <person name="Sudo H."/>
            <person name="Hosoiri T."/>
            <person name="Kaku Y."/>
            <person name="Kodaira H."/>
            <person name="Kondo H."/>
            <person name="Sugawara M."/>
            <person name="Takahashi M."/>
            <person name="Kanda K."/>
            <person name="Yokoi T."/>
            <person name="Furuya T."/>
            <person name="Kikkawa E."/>
            <person name="Omura Y."/>
            <person name="Abe K."/>
            <person name="Kamihara K."/>
            <person name="Katsuta N."/>
            <person name="Sato K."/>
            <person name="Tanikawa M."/>
            <person name="Yamazaki M."/>
            <person name="Ninomiya K."/>
            <person name="Ishibashi T."/>
            <person name="Yamashita H."/>
            <person name="Murakawa K."/>
            <person name="Fujimori K."/>
            <person name="Tanai H."/>
            <person name="Kimata M."/>
            <person name="Watanabe M."/>
            <person name="Hiraoka S."/>
            <person name="Chiba Y."/>
            <person name="Ishida S."/>
            <person name="Ono Y."/>
            <person name="Takiguchi S."/>
            <person name="Watanabe S."/>
            <person name="Yosida M."/>
            <person name="Hotuta T."/>
            <person name="Kusano J."/>
            <person name="Kanehori K."/>
            <person name="Takahashi-Fujii A."/>
            <person name="Hara H."/>
            <person name="Tanase T.-O."/>
            <person name="Nomura Y."/>
            <person name="Togiya S."/>
            <person name="Komai F."/>
            <person name="Hara R."/>
            <person name="Takeuchi K."/>
            <person name="Arita M."/>
            <person name="Imose N."/>
            <person name="Musashino K."/>
            <person name="Yuuki H."/>
            <person name="Oshima A."/>
            <person name="Sasaki N."/>
            <person name="Aotsuka S."/>
            <person name="Yoshikawa Y."/>
            <person name="Matsunawa H."/>
            <person name="Ichihara T."/>
            <person name="Shiohata N."/>
            <person name="Sano S."/>
            <person name="Moriya S."/>
            <person name="Momiyama H."/>
            <person name="Satoh N."/>
            <person name="Takami S."/>
            <person name="Terashima Y."/>
            <person name="Suzuki O."/>
            <person name="Nakagawa S."/>
            <person name="Senoh A."/>
            <person name="Mizoguchi H."/>
            <person name="Goto Y."/>
            <person name="Shimizu F."/>
            <person name="Wakebe H."/>
            <person name="Hishigaki H."/>
            <person name="Watanabe T."/>
            <person name="Sugiyama A."/>
            <person name="Takemoto M."/>
            <person name="Kawakami B."/>
            <person name="Yamazaki M."/>
            <person name="Watanabe K."/>
            <person name="Kumagai A."/>
            <person name="Itakura S."/>
            <person name="Fukuzumi Y."/>
            <person name="Fujimori Y."/>
            <person name="Komiyama M."/>
            <person name="Tashiro H."/>
            <person name="Tanigami A."/>
            <person name="Fujiwara T."/>
            <person name="Ono T."/>
            <person name="Yamada K."/>
            <person name="Fujii Y."/>
            <person name="Ozaki K."/>
            <person name="Hirao M."/>
            <person name="Ohmori Y."/>
            <person name="Kawabata A."/>
            <person name="Hikiji T."/>
            <person name="Kobatake N."/>
            <person name="Inagaki H."/>
            <person name="Ikema Y."/>
            <person name="Okamoto S."/>
            <person name="Okitani R."/>
            <person name="Kawakami T."/>
            <person name="Noguchi S."/>
            <person name="Itoh T."/>
            <person name="Shigeta K."/>
            <person name="Senba T."/>
            <person name="Matsumura K."/>
            <person name="Nakajima Y."/>
            <person name="Mizuno T."/>
            <person name="Morinaga M."/>
            <person name="Sasaki M."/>
            <person name="Togashi T."/>
            <person name="Oyama M."/>
            <person name="Hata H."/>
            <person name="Watanabe M."/>
            <person name="Komatsu T."/>
            <person name="Mizushima-Sugano J."/>
            <person name="Satoh T."/>
            <person name="Shirai Y."/>
            <person name="Takahashi Y."/>
            <person name="Nakagawa K."/>
            <person name="Okumura K."/>
            <person name="Nagase T."/>
            <person name="Nomura N."/>
            <person name="Kikuchi H."/>
            <person name="Masuho Y."/>
            <person name="Yamashita R."/>
            <person name="Nakai K."/>
            <person name="Yada T."/>
            <person name="Nakamura Y."/>
            <person name="Ohara O."/>
            <person name="Isogai T."/>
            <person name="Sugano S."/>
        </authorList>
    </citation>
    <scope>NUCLEOTIDE SEQUENCE [LARGE SCALE MRNA] (ISOFORM 2)</scope>
    <source>
        <tissue>Brain</tissue>
    </source>
</reference>
<reference key="4">
    <citation type="journal article" date="2006" name="Nature">
        <title>The DNA sequence and biological annotation of human chromosome 1.</title>
        <authorList>
            <person name="Gregory S.G."/>
            <person name="Barlow K.F."/>
            <person name="McLay K.E."/>
            <person name="Kaul R."/>
            <person name="Swarbreck D."/>
            <person name="Dunham A."/>
            <person name="Scott C.E."/>
            <person name="Howe K.L."/>
            <person name="Woodfine K."/>
            <person name="Spencer C.C.A."/>
            <person name="Jones M.C."/>
            <person name="Gillson C."/>
            <person name="Searle S."/>
            <person name="Zhou Y."/>
            <person name="Kokocinski F."/>
            <person name="McDonald L."/>
            <person name="Evans R."/>
            <person name="Phillips K."/>
            <person name="Atkinson A."/>
            <person name="Cooper R."/>
            <person name="Jones C."/>
            <person name="Hall R.E."/>
            <person name="Andrews T.D."/>
            <person name="Lloyd C."/>
            <person name="Ainscough R."/>
            <person name="Almeida J.P."/>
            <person name="Ambrose K.D."/>
            <person name="Anderson F."/>
            <person name="Andrew R.W."/>
            <person name="Ashwell R.I.S."/>
            <person name="Aubin K."/>
            <person name="Babbage A.K."/>
            <person name="Bagguley C.L."/>
            <person name="Bailey J."/>
            <person name="Beasley H."/>
            <person name="Bethel G."/>
            <person name="Bird C.P."/>
            <person name="Bray-Allen S."/>
            <person name="Brown J.Y."/>
            <person name="Brown A.J."/>
            <person name="Buckley D."/>
            <person name="Burton J."/>
            <person name="Bye J."/>
            <person name="Carder C."/>
            <person name="Chapman J.C."/>
            <person name="Clark S.Y."/>
            <person name="Clarke G."/>
            <person name="Clee C."/>
            <person name="Cobley V."/>
            <person name="Collier R.E."/>
            <person name="Corby N."/>
            <person name="Coville G.J."/>
            <person name="Davies J."/>
            <person name="Deadman R."/>
            <person name="Dunn M."/>
            <person name="Earthrowl M."/>
            <person name="Ellington A.G."/>
            <person name="Errington H."/>
            <person name="Frankish A."/>
            <person name="Frankland J."/>
            <person name="French L."/>
            <person name="Garner P."/>
            <person name="Garnett J."/>
            <person name="Gay L."/>
            <person name="Ghori M.R.J."/>
            <person name="Gibson R."/>
            <person name="Gilby L.M."/>
            <person name="Gillett W."/>
            <person name="Glithero R.J."/>
            <person name="Grafham D.V."/>
            <person name="Griffiths C."/>
            <person name="Griffiths-Jones S."/>
            <person name="Grocock R."/>
            <person name="Hammond S."/>
            <person name="Harrison E.S.I."/>
            <person name="Hart E."/>
            <person name="Haugen E."/>
            <person name="Heath P.D."/>
            <person name="Holmes S."/>
            <person name="Holt K."/>
            <person name="Howden P.J."/>
            <person name="Hunt A.R."/>
            <person name="Hunt S.E."/>
            <person name="Hunter G."/>
            <person name="Isherwood J."/>
            <person name="James R."/>
            <person name="Johnson C."/>
            <person name="Johnson D."/>
            <person name="Joy A."/>
            <person name="Kay M."/>
            <person name="Kershaw J.K."/>
            <person name="Kibukawa M."/>
            <person name="Kimberley A.M."/>
            <person name="King A."/>
            <person name="Knights A.J."/>
            <person name="Lad H."/>
            <person name="Laird G."/>
            <person name="Lawlor S."/>
            <person name="Leongamornlert D.A."/>
            <person name="Lloyd D.M."/>
            <person name="Loveland J."/>
            <person name="Lovell J."/>
            <person name="Lush M.J."/>
            <person name="Lyne R."/>
            <person name="Martin S."/>
            <person name="Mashreghi-Mohammadi M."/>
            <person name="Matthews L."/>
            <person name="Matthews N.S.W."/>
            <person name="McLaren S."/>
            <person name="Milne S."/>
            <person name="Mistry S."/>
            <person name="Moore M.J.F."/>
            <person name="Nickerson T."/>
            <person name="O'Dell C.N."/>
            <person name="Oliver K."/>
            <person name="Palmeiri A."/>
            <person name="Palmer S.A."/>
            <person name="Parker A."/>
            <person name="Patel D."/>
            <person name="Pearce A.V."/>
            <person name="Peck A.I."/>
            <person name="Pelan S."/>
            <person name="Phelps K."/>
            <person name="Phillimore B.J."/>
            <person name="Plumb R."/>
            <person name="Rajan J."/>
            <person name="Raymond C."/>
            <person name="Rouse G."/>
            <person name="Saenphimmachak C."/>
            <person name="Sehra H.K."/>
            <person name="Sheridan E."/>
            <person name="Shownkeen R."/>
            <person name="Sims S."/>
            <person name="Skuce C.D."/>
            <person name="Smith M."/>
            <person name="Steward C."/>
            <person name="Subramanian S."/>
            <person name="Sycamore N."/>
            <person name="Tracey A."/>
            <person name="Tromans A."/>
            <person name="Van Helmond Z."/>
            <person name="Wall M."/>
            <person name="Wallis J.M."/>
            <person name="White S."/>
            <person name="Whitehead S.L."/>
            <person name="Wilkinson J.E."/>
            <person name="Willey D.L."/>
            <person name="Williams H."/>
            <person name="Wilming L."/>
            <person name="Wray P.W."/>
            <person name="Wu Z."/>
            <person name="Coulson A."/>
            <person name="Vaudin M."/>
            <person name="Sulston J.E."/>
            <person name="Durbin R.M."/>
            <person name="Hubbard T."/>
            <person name="Wooster R."/>
            <person name="Dunham I."/>
            <person name="Carter N.P."/>
            <person name="McVean G."/>
            <person name="Ross M.T."/>
            <person name="Harrow J."/>
            <person name="Olson M.V."/>
            <person name="Beck S."/>
            <person name="Rogers J."/>
            <person name="Bentley D.R."/>
        </authorList>
    </citation>
    <scope>NUCLEOTIDE SEQUENCE [LARGE SCALE GENOMIC DNA]</scope>
</reference>
<reference key="5">
    <citation type="submission" date="2005-07" db="EMBL/GenBank/DDBJ databases">
        <authorList>
            <person name="Mural R.J."/>
            <person name="Istrail S."/>
            <person name="Sutton G.G."/>
            <person name="Florea L."/>
            <person name="Halpern A.L."/>
            <person name="Mobarry C.M."/>
            <person name="Lippert R."/>
            <person name="Walenz B."/>
            <person name="Shatkay H."/>
            <person name="Dew I."/>
            <person name="Miller J.R."/>
            <person name="Flanigan M.J."/>
            <person name="Edwards N.J."/>
            <person name="Bolanos R."/>
            <person name="Fasulo D."/>
            <person name="Halldorsson B.V."/>
            <person name="Hannenhalli S."/>
            <person name="Turner R."/>
            <person name="Yooseph S."/>
            <person name="Lu F."/>
            <person name="Nusskern D.R."/>
            <person name="Shue B.C."/>
            <person name="Zheng X.H."/>
            <person name="Zhong F."/>
            <person name="Delcher A.L."/>
            <person name="Huson D.H."/>
            <person name="Kravitz S.A."/>
            <person name="Mouchard L."/>
            <person name="Reinert K."/>
            <person name="Remington K.A."/>
            <person name="Clark A.G."/>
            <person name="Waterman M.S."/>
            <person name="Eichler E.E."/>
            <person name="Adams M.D."/>
            <person name="Hunkapiller M.W."/>
            <person name="Myers E.W."/>
            <person name="Venter J.C."/>
        </authorList>
    </citation>
    <scope>NUCLEOTIDE SEQUENCE [LARGE SCALE GENOMIC DNA]</scope>
</reference>
<reference key="6">
    <citation type="journal article" date="2004" name="Genome Res.">
        <title>The status, quality, and expansion of the NIH full-length cDNA project: the Mammalian Gene Collection (MGC).</title>
        <authorList>
            <consortium name="The MGC Project Team"/>
        </authorList>
    </citation>
    <scope>NUCLEOTIDE SEQUENCE [LARGE SCALE MRNA] (ISOFORM 1)</scope>
    <source>
        <tissue>PNS</tissue>
    </source>
</reference>
<reference key="7">
    <citation type="journal article" date="1999" name="J. Cell Biol.">
        <title>ZASP: a new Z-band alternatively spliced PDZ-motif protein.</title>
        <authorList>
            <person name="Faulkner G."/>
            <person name="Pallavicini A."/>
            <person name="Formentin E."/>
            <person name="Comelli A."/>
            <person name="Ievolella C."/>
            <person name="Trevisan S."/>
            <person name="Bortoletto G."/>
            <person name="Scannapieco P."/>
            <person name="Salamon M."/>
            <person name="Mouly V."/>
            <person name="Valle G."/>
            <person name="Lanfranchi G."/>
        </authorList>
    </citation>
    <scope>INTERACTION WITH LDB3</scope>
</reference>
<reference key="8">
    <citation type="journal article" date="2000" name="J. Biol. Chem.">
        <title>FATZ, a filamin-, actinin-, and telethonin-binding protein of the Z-disc of skeletal muscle.</title>
        <authorList>
            <person name="Faulkner G."/>
            <person name="Pallavicini A."/>
            <person name="Comelli A."/>
            <person name="Salamon M."/>
            <person name="Bortoletto G."/>
            <person name="Ievolella C."/>
            <person name="Trevisan S."/>
            <person name="Kojic' S."/>
            <person name="Dalla Vecchia F."/>
            <person name="Laveder P."/>
            <person name="Valle G."/>
            <person name="Lanfranchi G."/>
        </authorList>
    </citation>
    <scope>INTERACTION WITH MYOZ1</scope>
</reference>
<reference key="9">
    <citation type="journal article" date="2000" name="Proc. Natl. Acad. Sci. U.S.A.">
        <title>Calsarcins, a novel family of sarcomeric calcineurin-binding proteins.</title>
        <authorList>
            <person name="Frey N."/>
            <person name="Richardson J.A."/>
            <person name="Olson E.N."/>
        </authorList>
    </citation>
    <scope>INTERACTION WITH MYOZ1 AND MYOZ2</scope>
</reference>
<reference key="10">
    <citation type="journal article" date="2001" name="Proc. Natl. Acad. Sci. U.S.A.">
        <title>Myozenin: an alpha-actinin- and gamma-filamin-binding protein of skeletal muscle Z lines.</title>
        <authorList>
            <person name="Takada F."/>
            <person name="Vander Woude D.L."/>
            <person name="Tong H.-Q."/>
            <person name="Thompson T.G."/>
            <person name="Watkins S.C."/>
            <person name="Kunkel L.M."/>
            <person name="Beggs A.H."/>
        </authorList>
    </citation>
    <scope>INTERACTION WITH MYOZ1</scope>
    <scope>SUBCELLULAR LOCATION</scope>
</reference>
<reference key="11">
    <citation type="journal article" date="2002" name="J. Biol. Chem.">
        <title>Calsarcin-3, a novel skeletal muscle-specific member of the calsarcin family, interacts with multiple Z-disc proteins.</title>
        <authorList>
            <person name="Frey N."/>
            <person name="Olson E.N."/>
        </authorList>
    </citation>
    <scope>INTERACTION WITH MYOZ3</scope>
</reference>
<reference key="12">
    <citation type="journal article" date="2004" name="J. Cell Biol.">
        <title>Affixin interacts with alpha-actinin and mediates integrin signaling for reorganization of F-actin induced by initial cell-substrate interaction.</title>
        <authorList>
            <person name="Yamaji S."/>
            <person name="Suzuki A."/>
            <person name="Kanamori H."/>
            <person name="Mishima W."/>
            <person name="Yoshimi R."/>
            <person name="Takasaki H."/>
            <person name="Takabayashi M."/>
            <person name="Fujimaki K."/>
            <person name="Fujisawa S."/>
            <person name="Ohno S."/>
            <person name="Ishigatsubo Y."/>
        </authorList>
    </citation>
    <scope>INTERACTION WITH PARVB</scope>
</reference>
<reference key="13">
    <citation type="journal article" date="2006" name="J. Biol. Chem.">
        <title>Myomaxin is a novel transcriptional target of MEF2A that encodes a Xin-related alpha-actinin-interacting protein.</title>
        <authorList>
            <person name="Huang H.-T."/>
            <person name="Brand O.M."/>
            <person name="Mathew M."/>
            <person name="Ignatiou C."/>
            <person name="Ewen E.P."/>
            <person name="McCalmon S.A."/>
            <person name="Naya F.J."/>
        </authorList>
    </citation>
    <scope>INTERACTION WITH XIRP2</scope>
</reference>
<reference key="14">
    <citation type="journal article" date="2010" name="Eur. J. Cell Biol.">
        <title>The sarcomeric Z-disc component myopodin is a multiadapter protein that interacts with filamin and alpha-actinin.</title>
        <authorList>
            <person name="Linnemann A."/>
            <person name="van der Ven P.F."/>
            <person name="Vakeel P."/>
            <person name="Albinus B."/>
            <person name="Simonis D."/>
            <person name="Bendas G."/>
            <person name="Schenk J.A."/>
            <person name="Micheel B."/>
            <person name="Kley R.A."/>
            <person name="Fuerst D.O."/>
        </authorList>
    </citation>
    <scope>INTERACTION WITH SYNPO2</scope>
</reference>
<reference key="15">
    <citation type="journal article" date="2010" name="Exp. Cell Res.">
        <title>BPAG1 isoform-b: complex distribution pattern in striated and heart muscle and association with plectin and alpha-actinin.</title>
        <authorList>
            <person name="Steiner-Champliaud M.F."/>
            <person name="Schneider Y."/>
            <person name="Favre B."/>
            <person name="Paulhe F."/>
            <person name="Praetzel-Wunder S."/>
            <person name="Faulkner G."/>
            <person name="Konieczny P."/>
            <person name="Raith M."/>
            <person name="Wiche G."/>
            <person name="Adebola A."/>
            <person name="Liem R.K."/>
            <person name="Langbein L."/>
            <person name="Sonnenberg A."/>
            <person name="Fontao L."/>
            <person name="Borradori L."/>
        </authorList>
    </citation>
    <scope>INTERACTION WITH DST</scope>
    <scope>SUBCELLULAR LOCATION</scope>
</reference>
<reference key="16">
    <citation type="journal article" date="2012" name="Circ. Res.">
        <title>F-box and leucine-rich repeat protein 22 is a cardiac-enriched F-box protein that regulates sarcomeric protein turnover and is essential for maintenance of contractile function in vivo.</title>
        <authorList>
            <person name="Spaich S."/>
            <person name="Will R.D."/>
            <person name="Just S."/>
            <person name="Spaich S."/>
            <person name="Kuhn C."/>
            <person name="Frank D."/>
            <person name="Berger I.M."/>
            <person name="Wiemann S."/>
            <person name="Korn B."/>
            <person name="Koegl M."/>
            <person name="Backs J."/>
            <person name="Katus H.A."/>
            <person name="Rottbauer W."/>
            <person name="Frey N."/>
        </authorList>
    </citation>
    <scope>UBIQUITINATION BY FBXL22</scope>
</reference>
<reference key="17">
    <citation type="journal article" date="1999" name="Cell">
        <title>Structure of the alpha-actinin rod: molecular basis for cross-linking of actin filaments.</title>
        <authorList>
            <person name="Djinovic-Carugo K."/>
            <person name="Young P."/>
            <person name="Gautel M."/>
            <person name="Saraste M."/>
        </authorList>
    </citation>
    <scope>X-RAY CRYSTALLOGRAPHY (2.5 ANGSTROMS) OF 391-637</scope>
</reference>
<reference key="18">
    <citation type="journal article" date="2001" name="Nat. Struct. Biol.">
        <title>Ca2+-independent binding of an EF-hand domain to a novel motif in the alpha-actinin-titin complex.</title>
        <authorList>
            <person name="Atkinson R.A."/>
            <person name="Joseph C."/>
            <person name="Kelly G."/>
            <person name="Muskett F.W."/>
            <person name="Frenkiel T.A."/>
            <person name="Nietlispach D."/>
            <person name="Pastore A."/>
        </authorList>
    </citation>
    <scope>STRUCTURE BY NMR OF 823-894 IN COMPLEX WITH A TITIN Z-REPEAT</scope>
</reference>
<reference key="19">
    <citation type="journal article" date="2001" name="Structure">
        <title>Crystal structure of the alpha-actinin rod reveals an extensive torsional twist.</title>
        <authorList>
            <person name="Ylanne J."/>
            <person name="Scheffzek K."/>
            <person name="Young P."/>
            <person name="Saraste M."/>
        </authorList>
    </citation>
    <scope>X-RAY CRYSTALLOGRAPHY (2.8 ANGSTROMS) OF 274-746</scope>
</reference>
<reference key="20">
    <citation type="journal article" date="2003" name="Mol. Genet. Metab.">
        <title>Mutations in the muscle LIM protein and alpha-actinin-2 genes in dilated cardiomyopathy and endocardial fibroelastosis.</title>
        <authorList>
            <person name="Mohapatra B."/>
            <person name="Jimenez S."/>
            <person name="Lin J.H."/>
            <person name="Bowles K.R."/>
            <person name="Coveler K.J."/>
            <person name="Marx J.G."/>
            <person name="Chrisco M.A."/>
            <person name="Murphy R.T."/>
            <person name="Lurie P.R."/>
            <person name="Schwartz R.J."/>
            <person name="Elliott P.M."/>
            <person name="Vatta M."/>
            <person name="McKenna W."/>
            <person name="Towbin J.A."/>
            <person name="Bowles N.E."/>
        </authorList>
    </citation>
    <scope>VARIANT CMD1AA ARG-9</scope>
    <scope>VARIANT VAL-604</scope>
</reference>
<reference key="21">
    <citation type="journal article" date="2010" name="J. Am. Coll. Cardiol.">
        <title>Mutations in alpha-actinin-2 cause hypertrophic cardiomyopathy: a genome-wide analysis.</title>
        <authorList>
            <person name="Chiu C."/>
            <person name="Bagnall R.D."/>
            <person name="Ingles J."/>
            <person name="Yeates L."/>
            <person name="Kennerson M."/>
            <person name="Donald J.A."/>
            <person name="Jormakka M."/>
            <person name="Lind J.M."/>
            <person name="Semsarian C."/>
        </authorList>
    </citation>
    <scope>VARIANTS CMH23 THR-119; MET-495; ALA-583 AND GLY-628</scope>
</reference>
<reference key="22">
    <citation type="journal article" date="2014" name="BMC Med. Genet.">
        <title>Exome sequencing identifies a mutation in the ACTN2 gene in a family with idiopathic ventricular fibrillation, left ventricular noncompaction, and sudden death.</title>
        <authorList>
            <person name="Bagnall R.D."/>
            <person name="Molloy L.K."/>
            <person name="Kalman J.M."/>
            <person name="Semsarian C."/>
        </authorList>
    </citation>
    <scope>VARIANT CMD1AA THR-119</scope>
</reference>
<reference key="23">
    <citation type="journal article" date="2014" name="Circ. Cardiovasc. Genet.">
        <title>Novel alpha-actinin 2 variant associated with familial hypertrophic cardiomyopathy and juvenile atrial arrhythmias: a massively parallel sequencing study.</title>
        <authorList>
            <person name="Girolami F."/>
            <person name="Iascone M."/>
            <person name="Tomberli B."/>
            <person name="Bardi S."/>
            <person name="Benelli M."/>
            <person name="Marseglia G."/>
            <person name="Pescucci C."/>
            <person name="Pezzoli L."/>
            <person name="Sana M.E."/>
            <person name="Basso C."/>
            <person name="Marziliano N."/>
            <person name="Merlini P.A."/>
            <person name="Fornaro A."/>
            <person name="Cecchi F."/>
            <person name="Torricelli F."/>
            <person name="Olivotto I."/>
        </authorList>
    </citation>
    <scope>VARIANT CMH23 THR-228</scope>
</reference>
<reference key="24">
    <citation type="journal article" date="2019" name="Acta Neuropathol.">
        <title>ACTN2 mutations cause 'Multiple structured Core Disease' (MsCD).</title>
        <authorList>
            <person name="Lornage X."/>
            <person name="Romero N.B."/>
            <person name="Grosgogeat C.A."/>
            <person name="Malfatti E."/>
            <person name="Donkervoort S."/>
            <person name="Marchetti M.M."/>
            <person name="Neuhaus S.B."/>
            <person name="Foley A.R."/>
            <person name="Labasse C."/>
            <person name="Schneider R."/>
            <person name="Carlier R.Y."/>
            <person name="Chao K.R."/>
            <person name="Medne L."/>
            <person name="Deleuze J.F."/>
            <person name="Orlikowski D."/>
            <person name="Boennemann C.G."/>
            <person name="Gupta V.A."/>
            <person name="Fardeau M."/>
            <person name="Boehm J."/>
            <person name="Laporte J."/>
        </authorList>
    </citation>
    <scope>VARIANTS CMYO8 ARG-727 AND 732-ALA--ILE-742 DEL</scope>
    <scope>INVOLVEMENT IN CMYO8</scope>
    <scope>SUBCELLULAR LOCATION</scope>
</reference>
<reference key="25">
    <citation type="journal article" date="2019" name="Ann. Neurol.">
        <title>Actininopathy: A new muscular dystrophy caused by ACTN2 dominant mutations.</title>
        <authorList>
            <person name="Savarese M."/>
            <person name="Palmio J."/>
            <person name="Poza J.J."/>
            <person name="Weinberg J."/>
            <person name="Olive M."/>
            <person name="Cobo A.M."/>
            <person name="Vihola A."/>
            <person name="Jonson P.H."/>
            <person name="Sarparanta J."/>
            <person name="Garcia-Bragado F."/>
            <person name="Urtizberea J.A."/>
            <person name="Hackman P."/>
            <person name="Udd B."/>
        </authorList>
    </citation>
    <scope>VARIANTS MPD6 PRO-131 AND ARG-487</scope>
    <scope>INVOLVEMENT IN MPD6</scope>
</reference>
<reference key="26">
    <citation type="journal article" date="2024" name="Ann. Clin. Transl. Neurol.">
        <title>Recurring homozygous ACTN2 variant (p.Arg506Gly) causes a recessive myopathy.</title>
        <authorList>
            <consortium name="Undiagnosed Diseases Network"/>
            <person name="Donkervoort S."/>
            <person name="Mohassel P."/>
            <person name="O'Leary M."/>
            <person name="Bonner D.E."/>
            <person name="Hartley T."/>
            <person name="Acquaye N."/>
            <person name="Brull A."/>
            <person name="Mozaffar T."/>
            <person name="Saporta M.A."/>
            <person name="Dyment D.A."/>
            <person name="Sampson J.B."/>
            <person name="Pajusalu S."/>
            <person name="Austin-Tse C."/>
            <person name="Hurth K."/>
            <person name="Cohen J.S."/>
            <person name="McWalter K."/>
            <person name="Warman-Chardon J."/>
            <person name="Crunk A."/>
            <person name="Foley A.R."/>
            <person name="Mammen A.L."/>
            <person name="Wheeler M.T."/>
            <person name="O'Donnell-Luria A."/>
            <person name="Boennemann C.G."/>
        </authorList>
    </citation>
    <scope>VARIANT GLY-506</scope>
    <scope>INVOLVEMENT IN AUTOSOMAL RECESSIVE MYOPATHY</scope>
</reference>